<gene>
    <name evidence="44" type="primary">RNF213</name>
    <name evidence="36" type="synonym">ALO17</name>
    <name evidence="44" type="synonym">C17orf27</name>
    <name evidence="35" type="synonym">KIAA1554</name>
    <name evidence="35" type="synonym">KIAA1618</name>
    <name evidence="39" type="synonym">MYSTR</name>
</gene>
<organism>
    <name type="scientific">Homo sapiens</name>
    <name type="common">Human</name>
    <dbReference type="NCBI Taxonomy" id="9606"/>
    <lineage>
        <taxon>Eukaryota</taxon>
        <taxon>Metazoa</taxon>
        <taxon>Chordata</taxon>
        <taxon>Craniata</taxon>
        <taxon>Vertebrata</taxon>
        <taxon>Euteleostomi</taxon>
        <taxon>Mammalia</taxon>
        <taxon>Eutheria</taxon>
        <taxon>Euarchontoglires</taxon>
        <taxon>Primates</taxon>
        <taxon>Haplorrhini</taxon>
        <taxon>Catarrhini</taxon>
        <taxon>Hominidae</taxon>
        <taxon>Homo</taxon>
    </lineage>
</organism>
<feature type="chain" id="PRO_0000415917" description="E3 ubiquitin-protein ligase RNF213">
    <location>
        <begin position="1"/>
        <end position="5207"/>
    </location>
</feature>
<feature type="zinc finger region" description="RING-type" evidence="3">
    <location>
        <begin position="3997"/>
        <end position="4036"/>
    </location>
</feature>
<feature type="zinc finger region" description="RZ-type" evidence="4 34">
    <location>
        <begin position="4483"/>
        <end position="4555"/>
    </location>
</feature>
<feature type="region of interest" description="Disordered" evidence="5">
    <location>
        <begin position="1"/>
        <end position="20"/>
    </location>
</feature>
<feature type="region of interest" description="Disordered" evidence="5">
    <location>
        <begin position="27"/>
        <end position="365"/>
    </location>
</feature>
<feature type="coiled-coil region" evidence="2">
    <location>
        <begin position="343"/>
        <end position="374"/>
    </location>
</feature>
<feature type="compositionally biased region" description="Polar residues" evidence="5">
    <location>
        <begin position="34"/>
        <end position="43"/>
    </location>
</feature>
<feature type="compositionally biased region" description="Basic residues" evidence="5">
    <location>
        <begin position="89"/>
        <end position="100"/>
    </location>
</feature>
<feature type="compositionally biased region" description="Low complexity" evidence="5">
    <location>
        <begin position="101"/>
        <end position="117"/>
    </location>
</feature>
<feature type="compositionally biased region" description="Low complexity" evidence="5">
    <location>
        <begin position="136"/>
        <end position="157"/>
    </location>
</feature>
<feature type="compositionally biased region" description="Polar residues" evidence="5">
    <location>
        <begin position="188"/>
        <end position="197"/>
    </location>
</feature>
<feature type="compositionally biased region" description="Polar residues" evidence="5">
    <location>
        <begin position="248"/>
        <end position="266"/>
    </location>
</feature>
<feature type="compositionally biased region" description="Basic and acidic residues" evidence="5">
    <location>
        <begin position="285"/>
        <end position="294"/>
    </location>
</feature>
<feature type="compositionally biased region" description="Basic and acidic residues" evidence="5">
    <location>
        <begin position="309"/>
        <end position="346"/>
    </location>
</feature>
<feature type="compositionally biased region" description="Basic and acidic residues" evidence="5">
    <location>
        <begin position="353"/>
        <end position="362"/>
    </location>
</feature>
<feature type="active site" description="Nucleophile; for E3 ubiquitin-lipopolysaccharide ligase activity" evidence="4">
    <location>
        <position position="4516"/>
    </location>
</feature>
<feature type="binding site" evidence="1">
    <location>
        <begin position="1995"/>
        <end position="2000"/>
    </location>
    <ligand>
        <name>ATP</name>
        <dbReference type="ChEBI" id="CHEBI:30616"/>
    </ligand>
</feature>
<feature type="binding site" evidence="1">
    <location>
        <position position="2098"/>
    </location>
    <ligand>
        <name>ATP</name>
        <dbReference type="ChEBI" id="CHEBI:30616"/>
    </ligand>
</feature>
<feature type="binding site" evidence="1">
    <location>
        <position position="2155"/>
    </location>
    <ligand>
        <name>ATP</name>
        <dbReference type="ChEBI" id="CHEBI:30616"/>
    </ligand>
</feature>
<feature type="binding site" evidence="1">
    <location>
        <position position="2216"/>
    </location>
    <ligand>
        <name>ATP</name>
        <dbReference type="ChEBI" id="CHEBI:30616"/>
    </ligand>
</feature>
<feature type="binding site" evidence="1">
    <location>
        <position position="2499"/>
    </location>
    <ligand>
        <name>ATP</name>
        <dbReference type="ChEBI" id="CHEBI:30616"/>
    </ligand>
</feature>
<feature type="binding site" evidence="1">
    <location>
        <position position="2574"/>
    </location>
    <ligand>
        <name>ATP</name>
        <dbReference type="ChEBI" id="CHEBI:30616"/>
    </ligand>
</feature>
<feature type="binding site" evidence="1">
    <location>
        <position position="3997"/>
    </location>
    <ligand>
        <name>Zn(2+)</name>
        <dbReference type="ChEBI" id="CHEBI:29105"/>
        <label>1</label>
    </ligand>
</feature>
<feature type="binding site" evidence="1">
    <location>
        <position position="4000"/>
    </location>
    <ligand>
        <name>Zn(2+)</name>
        <dbReference type="ChEBI" id="CHEBI:29105"/>
        <label>1</label>
    </ligand>
</feature>
<feature type="binding site" evidence="1">
    <location>
        <position position="4012"/>
    </location>
    <ligand>
        <name>Zn(2+)</name>
        <dbReference type="ChEBI" id="CHEBI:29105"/>
        <label>2</label>
    </ligand>
</feature>
<feature type="binding site" evidence="1">
    <location>
        <position position="4014"/>
    </location>
    <ligand>
        <name>Zn(2+)</name>
        <dbReference type="ChEBI" id="CHEBI:29105"/>
        <label>2</label>
    </ligand>
</feature>
<feature type="binding site" evidence="1">
    <location>
        <position position="4017"/>
    </location>
    <ligand>
        <name>Zn(2+)</name>
        <dbReference type="ChEBI" id="CHEBI:29105"/>
        <label>1</label>
    </ligand>
</feature>
<feature type="binding site" evidence="1">
    <location>
        <position position="4020"/>
    </location>
    <ligand>
        <name>Zn(2+)</name>
        <dbReference type="ChEBI" id="CHEBI:29105"/>
        <label>1</label>
    </ligand>
</feature>
<feature type="binding site" evidence="1">
    <location>
        <position position="4032"/>
    </location>
    <ligand>
        <name>Zn(2+)</name>
        <dbReference type="ChEBI" id="CHEBI:29105"/>
        <label>2</label>
    </ligand>
</feature>
<feature type="binding site" evidence="1">
    <location>
        <position position="4035"/>
    </location>
    <ligand>
        <name>Zn(2+)</name>
        <dbReference type="ChEBI" id="CHEBI:29105"/>
        <label>2</label>
    </ligand>
</feature>
<feature type="binding site" evidence="4">
    <location>
        <position position="4505"/>
    </location>
    <ligand>
        <name>Zn(2+)</name>
        <dbReference type="ChEBI" id="CHEBI:29105"/>
        <label>3</label>
    </ligand>
</feature>
<feature type="binding site" evidence="4">
    <location>
        <position position="4509"/>
    </location>
    <ligand>
        <name>Zn(2+)</name>
        <dbReference type="ChEBI" id="CHEBI:29105"/>
        <label>3</label>
    </ligand>
</feature>
<feature type="binding site" evidence="4">
    <location>
        <position position="4525"/>
    </location>
    <ligand>
        <name>Zn(2+)</name>
        <dbReference type="ChEBI" id="CHEBI:29105"/>
        <label>3</label>
    </ligand>
</feature>
<feature type="binding site" evidence="4">
    <location>
        <position position="4528"/>
    </location>
    <ligand>
        <name>Zn(2+)</name>
        <dbReference type="ChEBI" id="CHEBI:29105"/>
        <label>3</label>
    </ligand>
</feature>
<feature type="modified residue" description="Phosphoserine" evidence="53">
    <location>
        <position position="208"/>
    </location>
</feature>
<feature type="modified residue" description="Phosphoserine" evidence="50 52 53">
    <location>
        <position position="217"/>
    </location>
</feature>
<feature type="modified residue" description="Phosphoserine" evidence="45 46 47 48 49 50 51 52 53">
    <location>
        <position position="1258"/>
    </location>
</feature>
<feature type="modified residue" description="Phosphoserine" evidence="52">
    <location>
        <position position="2273"/>
    </location>
</feature>
<feature type="cross-link" description="Glycyl lysine isopeptide (Lys-Gly) (interchain with G-Cter in SUMO2)" evidence="54">
    <location>
        <position position="1151"/>
    </location>
</feature>
<feature type="splice variant" id="VSP_042416" description="In isoform 4." evidence="37">
    <location>
        <begin position="1"/>
        <end position="4650"/>
    </location>
</feature>
<feature type="splice variant" id="VSP_042417" description="In isoform 2." evidence="40">
    <original>E</original>
    <variation>EGATSEVLVDAAVDLISDEWEAANAIPSKRRKQDAAPLEAASVPSADCEQ</variation>
    <location>
        <position position="87"/>
    </location>
</feature>
<feature type="splice variant" id="VSP_042418" description="In isoform 3." evidence="37 38">
    <original>SQTSILQGFSYSDLRKFGIVLSAVITKSWPRTADNFNDILKHLLTLADVKHVFRL</original>
    <variation>VNNLSSWETDSGSQLCSAMTQLRAMKHPLGLSSSANSEIGKWAPSSLAKGNGAEI</variation>
    <location>
        <begin position="1009"/>
        <end position="1063"/>
    </location>
</feature>
<feature type="splice variant" id="VSP_042419" description="In isoform 3." evidence="37 38">
    <location>
        <begin position="1064"/>
        <end position="5207"/>
    </location>
</feature>
<feature type="splice variant" id="VSP_042420" description="In isoform 4." evidence="37">
    <original>QEQHQLSSRR</original>
    <variation>MTRKSAPTSG</variation>
    <location>
        <begin position="4651"/>
        <end position="4660"/>
    </location>
</feature>
<feature type="sequence variant" id="VAR_085287" description="Rare variant detected in a patient with Moyamoya disease in Caucasian population." evidence="26">
    <original>C</original>
    <variation>R</variation>
    <location>
        <position position="118"/>
    </location>
</feature>
<feature type="sequence variant" id="VAR_085288" description="Rare variant detected in a patient with Moyamoya disease in Caucasian population." evidence="26">
    <original>L</original>
    <variation>M</variation>
    <location>
        <position position="133"/>
    </location>
</feature>
<feature type="sequence variant" id="VAR_085289" description="Rare variant detected in a patient with Moyamoya disease in Caucasian population." evidence="26">
    <original>I</original>
    <variation>N</variation>
    <location>
        <position position="209"/>
    </location>
</feature>
<feature type="sequence variant" id="VAR_085290" description="Rare variant detected in a patient with Moyamoya disease in Caucasian population." evidence="26">
    <original>P</original>
    <variation>L</variation>
    <location>
        <position position="395"/>
    </location>
</feature>
<feature type="sequence variant" id="VAR_075635" description="Rare variant detected in a sporadic case of Moyamoya disease in Caucasian population." evidence="17">
    <location>
        <position position="529"/>
    </location>
</feature>
<feature type="sequence variant" id="VAR_085291" description="Rare variant detected in cases of Moyamoya disease in East Asian populations." evidence="27">
    <original>E</original>
    <variation>K</variation>
    <location>
        <position position="996"/>
    </location>
</feature>
<feature type="sequence variant" id="VAR_085292" description="Rare variant detected in a patient with Moyamoya disease in Caucasian population." evidence="26">
    <original>A</original>
    <variation>V</variation>
    <location>
        <position position="1135"/>
    </location>
</feature>
<feature type="sequence variant" id="VAR_075636" description="Rare variant detected in a sporadic case of Moyamoya disease in East Asian population." evidence="18">
    <original>A</original>
    <variation>V</variation>
    <location>
        <position position="1622"/>
    </location>
</feature>
<feature type="sequence variant" id="VAR_085293" description="Rare variant detected in a patient with Moyamoya disease in Caucasian population." evidence="26">
    <original>T</original>
    <variation>K</variation>
    <location>
        <position position="1705"/>
    </location>
</feature>
<feature type="sequence variant" id="VAR_085294" description="Rare variant detected in a patient with Moyamoya disease in Caucasian population." evidence="26">
    <original>P</original>
    <variation>L</variation>
    <location>
        <position position="1721"/>
    </location>
</feature>
<feature type="sequence variant" id="VAR_085295" description="Rare variant detected in a patient with Moyamoya disease in Caucasian population." evidence="26">
    <original>A</original>
    <variation>T</variation>
    <location>
        <position position="1844"/>
    </location>
</feature>
<feature type="sequence variant" id="VAR_067020" description="In dbSNP:rs138516230." evidence="8">
    <original>D</original>
    <variation>E</variation>
    <location>
        <position position="2554"/>
    </location>
</feature>
<feature type="sequence variant" id="VAR_085296" description="Rare variant detected in a patient with Moyamoya disease in Caucasian population." evidence="26">
    <original>R</original>
    <variation>H</variation>
    <location>
        <position position="3846"/>
    </location>
</feature>
<feature type="sequence variant" id="VAR_067021" description="Rare variant detected in a sporadic case of Moyamoya disease." evidence="8">
    <original>M</original>
    <variation>V</variation>
    <location>
        <position position="3891"/>
    </location>
</feature>
<feature type="sequence variant" id="VAR_067022" description="In dbSNP:rs61740658." evidence="8">
    <original>E</original>
    <variation>G</variation>
    <location>
        <position position="3915"/>
    </location>
</feature>
<feature type="sequence variant" id="VAR_075637" description="Rare variant detected in a sporadic case of Moyamoya disease in Caucasian population." evidence="17">
    <original>R</original>
    <variation>Q</variation>
    <location>
        <position position="3922"/>
    </location>
</feature>
<feature type="sequence variant" id="VAR_085297" description="Rare variant detected in a patient with Moyamoya disease in Caucasian population." evidence="26">
    <original>A</original>
    <variation>T</variation>
    <location>
        <position position="3927"/>
    </location>
</feature>
<feature type="sequence variant" id="VAR_075638" description="Rare variant detected in patients with Moyamoya disease in East Asian and Caucasian populations." evidence="18 26">
    <original>V</original>
    <variation>M</variation>
    <location>
        <position position="3933"/>
    </location>
</feature>
<feature type="sequence variant" id="VAR_067023" description="Variant detected in cases of Moyamoya disease in Caucasian populations." evidence="9">
    <original>N</original>
    <variation>D</variation>
    <location>
        <position position="3962"/>
    </location>
</feature>
<feature type="sequence variant" id="VAR_085298" description="Rare variant detected in cases of Moyamoya disease." evidence="32">
    <original>PC</original>
    <variation>GLG</variation>
    <location>
        <begin position="3996"/>
        <end position="3997"/>
    </location>
</feature>
<feature type="sequence variant" id="VAR_075639" description="Rare variant detected in a sporadic case of Moyamoya disease in Caucasian population; abolished E3 ubiquitin-protein ligase activity." evidence="17 31">
    <original>C</original>
    <variation>Y</variation>
    <location>
        <position position="3997"/>
    </location>
</feature>
<feature type="sequence variant" id="VAR_075640" description="Rare variant detected in a sporadic case of Moyamoya disease in East Asian population; abolished E3 ubiquitin-protein ligase activity." evidence="13 31">
    <original>P</original>
    <variation>R</variation>
    <location>
        <position position="4007"/>
    </location>
</feature>
<feature type="sequence variant" id="VAR_067024" description="In MYMY2; variant detected in cases of Moyamoya disease in Caucasian and Asian populations; inhibitory effect on angiogenic activity of vascular endothelial cells; does not affect E3 ubiquitin-protein ligase activity." evidence="9 17 24 26 31">
    <original>D</original>
    <variation>N</variation>
    <location>
        <position position="4013"/>
    </location>
</feature>
<feature type="sequence variant" id="VAR_085299" description="Rare variant detected in a patient with Moyamoya disease in Caucasian population; abolished E3 ubiquitin-protein ligase activity; does not affect ubiquitination of lipopolysaccharide." evidence="26 31 34">
    <original>H</original>
    <variation>N</variation>
    <location>
        <position position="4014"/>
    </location>
</feature>
<feature type="sequence variant" id="VAR_085300" description="Rare variant detected in patients with Moyamoya disease; abolished E3 ubiquitin-protein ligase activity." evidence="25 31">
    <original>C</original>
    <variation>S</variation>
    <location>
        <position position="4017"/>
    </location>
</feature>
<feature type="sequence variant" id="VAR_075641" description="Rare variant detected in patients with Moyamoya disease in Caucasian population; strongly decreased E3 ubiquitin-protein ligase activity." evidence="17 24 26 31">
    <original>R</original>
    <variation>C</variation>
    <location>
        <position position="4019"/>
    </location>
</feature>
<feature type="sequence variant" id="VAR_085301" description="Variant detected in patients with Moyamoya disease; strongly decreased E3 ubiquitin-protein ligase activity; does not affect ubiquitination of lipopolysaccharide." evidence="31 34">
    <original>W</original>
    <variation>R</variation>
    <location>
        <position position="4024"/>
    </location>
</feature>
<feature type="sequence variant" id="VAR_085302" description="Rare variant detected in a patient with Moyamoya disease in Caucasian population; abolished E3 ubiquitin-protein ligase activity." evidence="26 31">
    <original>C</original>
    <variation>R</variation>
    <location>
        <position position="4032"/>
    </location>
</feature>
<feature type="sequence variant" id="VAR_085303" description="Rare variant detected in a patient with Moyamoya disease in Caucasian population; abolished E3 ubiquitin-protein ligase activity." evidence="26 31">
    <original>P</original>
    <variation>L</variation>
    <location>
        <position position="4033"/>
    </location>
</feature>
<feature type="sequence variant" id="VAR_079573" description="Rare variant detected in patients with Moyamoya disease in Caucasian population." evidence="24 26">
    <original>E</original>
    <variation>K</variation>
    <location>
        <position position="4042"/>
    </location>
</feature>
<feature type="sequence variant" id="VAR_085304" description="Rare variant detected in a patient with Moyamoya disease in Caucasian population." evidence="26">
    <original>H</original>
    <variation>P</variation>
    <location>
        <position position="4051"/>
    </location>
</feature>
<feature type="sequence variant" id="VAR_085305" description="Rare variant detected in cases of Moyamoya disease in East Asian populations." evidence="27">
    <original>H</original>
    <variation>P</variation>
    <location>
        <position position="4058"/>
    </location>
</feature>
<feature type="sequence variant" id="VAR_067025" description="Variant detected in cases of Moyamoya disease in Caucasian and East Asian populations." evidence="9 26 27">
    <original>R</original>
    <variation>Q</variation>
    <location>
        <position position="4062"/>
    </location>
</feature>
<feature type="sequence variant" id="VAR_075642" description="Rare variant detected in a sporadic case of Moyamoya disease in Asian population." evidence="17">
    <original>I</original>
    <variation>V</variation>
    <location>
        <position position="4076"/>
    </location>
</feature>
<feature type="sequence variant" id="VAR_085306" description="Rare variant detected in cases of Moyamoya disease." evidence="32">
    <original>T</original>
    <variation>R</variation>
    <location>
        <position position="4114"/>
    </location>
</feature>
<feature type="sequence variant" id="VAR_075643" description="Rare variant detected in a sporadic case of Moyamoya disease in Caucasian population." evidence="17">
    <location>
        <position position="4115"/>
    </location>
</feature>
<feature type="sequence variant" id="VAR_075644" description="Rare variant detected in a sporadic case of Moyamoya disease in Caucasian population." evidence="21">
    <original>S</original>
    <variation>F</variation>
    <location>
        <position position="4118"/>
    </location>
</feature>
<feature type="sequence variant" id="VAR_085307" description="Rare variant detected in cases of Moyamoya disease." evidence="32">
    <original>F</original>
    <variation>L</variation>
    <location>
        <position position="4120"/>
    </location>
</feature>
<feature type="sequence variant" id="VAR_085308" description="Rare variant detected in a patient with Moyamoya disease in Caucasian population." evidence="26">
    <original>D</original>
    <variation>V</variation>
    <location>
        <position position="4122"/>
    </location>
</feature>
<feature type="sequence variant" id="VAR_075645" description="Rare variant detected in a sporadic case of Moyamoya disease in East Asian population." evidence="18">
    <original>R</original>
    <variation>C</variation>
    <location>
        <position position="4131"/>
    </location>
</feature>
<feature type="sequence variant" id="VAR_079574" description="Rare variant detected in cases of Moyamoya disease in Slovakian and Czech populations; inhibitory effect on angiogenic activity of vascular endothelial cells." evidence="24">
    <original>V</original>
    <variation>A</variation>
    <location>
        <position position="4146"/>
    </location>
</feature>
<feature type="sequence variant" id="VAR_085309" description="Variant detected in cases of Moyamoya disease in a Caucasian family." evidence="30">
    <original>K</original>
    <variation>E</variation>
    <location>
        <position position="4185"/>
    </location>
</feature>
<feature type="sequence variant" id="VAR_075646" description="Found in a heterozygous family with heterogeneous intracerebral vasculopathy." evidence="16">
    <original>K</original>
    <variation>T</variation>
    <location>
        <position position="4185"/>
    </location>
</feature>
<feature type="sequence variant" id="VAR_085310" description="Variant detected in cases of Moyamoya disease in a Caucasian family." evidence="30">
    <original>A</original>
    <variation>T</variation>
    <location>
        <position position="4188"/>
    </location>
</feature>
<feature type="sequence variant" id="VAR_075647" description="Rare variant detected in a sporadic case of Moyamoya disease in Caucasian population." evidence="17">
    <original>D</original>
    <variation>E</variation>
    <location>
        <position position="4237"/>
    </location>
</feature>
<feature type="sequence variant" id="VAR_075648" description="Rare variant detected in a sporadic case of Moyamoya disease in East Asian population." evidence="13">
    <original>Q</original>
    <variation>L</variation>
    <location>
        <position position="4367"/>
    </location>
</feature>
<feature type="sequence variant" id="VAR_067026" description="In MYMY2; dbSNP:rs148731719." evidence="8 13 26">
    <original>A</original>
    <variation>T</variation>
    <location>
        <position position="4399"/>
    </location>
</feature>
<feature type="sequence variant" id="VAR_067027" description="Rare variant detected in a sporadic case of Moyamoya disease; dbSNP:rs145282452." evidence="8">
    <original>V</original>
    <variation>M</variation>
    <location>
        <position position="4567"/>
    </location>
</feature>
<feature type="sequence variant" id="VAR_075649" description="Rare variant detected in a sporadic case of Moyamoya disease in East Asian population." evidence="13">
    <original>T</original>
    <variation>P</variation>
    <location>
        <position position="4586"/>
    </location>
</feature>
<feature type="sequence variant" id="VAR_067028" description="Variant detected in cases of Moyamoya disease in Caucasian populations." evidence="9 26">
    <original>P</original>
    <variation>S</variation>
    <location>
        <position position="4608"/>
    </location>
</feature>
<feature type="sequence variant" id="VAR_075650" description="Rare variant detected in a sporadic case of Moyamoya disease in East Asian population." evidence="13">
    <original>L</original>
    <variation>V</variation>
    <location>
        <position position="4631"/>
    </location>
</feature>
<feature type="sequence variant" id="VAR_085311" description="Rare variant detected in a case of Moyamoya disease; does not affect ubiquitination of lipopolysaccharide." evidence="34">
    <original>T</original>
    <variation>I</variation>
    <location>
        <position position="4638"/>
    </location>
</feature>
<feature type="sequence variant" id="VAR_085312" description="Rare variant detected in a patient with Moyamoya disease in Caucasian population." evidence="26">
    <original>G</original>
    <variation>S</variation>
    <location>
        <position position="4640"/>
    </location>
</feature>
<feature type="sequence variant" id="VAR_079575" description="Rare variant detected in patients with Moyamoya disease." evidence="24 25">
    <original>W</original>
    <variation>L</variation>
    <location>
        <position position="4677"/>
    </location>
</feature>
<feature type="sequence variant" id="VAR_075651" description="Rare variant detected in a sporadic case of Moyamoya disease in Caucasian population." evidence="17">
    <original>K</original>
    <variation>T</variation>
    <location>
        <position position="4732"/>
    </location>
</feature>
<feature type="sequence variant" id="VAR_067029" description="Rare variant detected in a sporadic case of Moyamoya disease." evidence="8">
    <original>V</original>
    <variation>M</variation>
    <location>
        <position position="4765"/>
    </location>
</feature>
<feature type="sequence variant" id="VAR_067030" description="In MYMY2; very frequent in individuals affected by Moyamoya disease; strongly increases the risk of Moyamoya disease; induces genomic instability; shows decreased ATPase activity; does not affect ubiquitination of lipopolysaccharide." evidence="8 9 10 11 12 13 14 17 18 20 34">
    <original>R</original>
    <variation>K</variation>
    <location>
        <position position="4810"/>
    </location>
</feature>
<feature type="sequence variant" id="VAR_067031" description="Variant detected in cases of Moyamoya disease in East Asian populations." evidence="9">
    <original>D</original>
    <variation>N</variation>
    <location>
        <position position="4863"/>
    </location>
</feature>
<feature type="sequence variant" id="VAR_067032" description="Variant detected in cases of Moyamoya disease in East Asian populations and rare variant detected in a sporadic case of Moyamoya disease; does not affect ubiquitination of lipopolysaccharide." evidence="9 13 34">
    <original>E</original>
    <variation>D</variation>
    <location>
        <position position="4950"/>
    </location>
</feature>
<feature type="sequence variant" id="VAR_067033" description="Variant detected in cases of Moyamoya disease in East Asian populations and rare variant detected in a sporadic case of Moyamoya disease; does not affect ubiquitination of lipopolysaccharide; dbSNP:rs138130613." evidence="9 13 34">
    <original>A</original>
    <variation>V</variation>
    <location>
        <position position="5021"/>
    </location>
</feature>
<feature type="sequence variant" id="VAR_075652" description="Rare variant detected in a sporadic case of Moyamoya disease in East Asian population." evidence="13">
    <original>M</original>
    <variation>I</variation>
    <location>
        <position position="5136"/>
    </location>
</feature>
<feature type="sequence variant" id="VAR_067034" description="Variant detected in cases of Moyamoya disease in East Asian populations." evidence="9">
    <original>D</original>
    <variation>E</variation>
    <location>
        <position position="5160"/>
    </location>
</feature>
<feature type="sequence variant" id="VAR_075653" description="Rare variant detected in a sporadic case of Moyamoya disease in Caucasian population." evidence="17">
    <original>V</original>
    <variation>I</variation>
    <location>
        <position position="5163"/>
    </location>
</feature>
<feature type="sequence variant" id="VAR_067035" description="Variant detected in cases of Moyamoya disease in East Asian populations." evidence="9">
    <original>E</original>
    <variation>G</variation>
    <location>
        <position position="5176"/>
    </location>
</feature>
<feature type="mutagenesis site" description="Impaired ATP-binding leading to decreased ATPase activity; abolished ubiquitination of lipopolysaccharide. In mutant A1A2; abolished ATP-binding and localization to lipid droplets; when associated with A-2775." evidence="15 28 34">
    <original>K</original>
    <variation>A</variation>
    <location>
        <position position="2426"/>
    </location>
</feature>
<feature type="mutagenesis site" description="Decreased ATPase activity; abolished ubiquitination of lipopolysaccharide. In mutant B1B2; abolished ATPase activity and localization to lipid droplets; when associated with A-2845." evidence="15 28 34">
    <original>E</original>
    <variation>A</variation>
    <location>
        <position position="2488"/>
    </location>
</feature>
<feature type="mutagenesis site" description="Loss of ATPase hydrolysis." evidence="20">
    <original>E</original>
    <variation>Q</variation>
    <location>
        <position position="2488"/>
    </location>
</feature>
<feature type="mutagenesis site" description="Impaired ATP-binding leading to decreased ATPase activity; abolished ubiquitination of lipopolysaccharide. In mutant A1A2; abolished ATP-binding and localization to lipid droplets; when associated with A-2426." evidence="15 28 34">
    <original>K</original>
    <variation>A</variation>
    <location>
        <position position="2775"/>
    </location>
</feature>
<feature type="mutagenesis site" description="Decreased ATPase activity; abolished ubiquitination of lipopolysaccharide. In mutant B1B2; abolished ATPase activity and localization to lipid droplets; when associated with A-2488." evidence="15 28 34">
    <original>E</original>
    <variation>A</variation>
    <location>
        <position position="2845"/>
    </location>
</feature>
<feature type="mutagenesis site" description="Abolished ability to ubiquitinate lipopolysaccharide." evidence="34">
    <original>H</original>
    <variation>A</variation>
    <location>
        <position position="4509"/>
    </location>
</feature>
<feature type="sequence conflict" description="In Ref. 4; AAH36891/AAH40341." evidence="40" ref="4">
    <original>M</original>
    <variation>T</variation>
    <location>
        <position position="270"/>
    </location>
</feature>
<feature type="sequence conflict" description="In Ref. 4; AAH36891/AAH40341." evidence="40" ref="4">
    <original>M</original>
    <variation>T</variation>
    <location>
        <position position="321"/>
    </location>
</feature>
<feature type="sequence conflict" description="In Ref. 4; AAH36891." evidence="40" ref="4">
    <original>K</original>
    <variation>N</variation>
    <location>
        <position position="369"/>
    </location>
</feature>
<feature type="sequence conflict" description="In Ref. 1; BAK53191 and 6; BAB13444." evidence="40" ref="1 6">
    <original>N</original>
    <variation>D</variation>
    <location>
        <position position="1045"/>
    </location>
</feature>
<feature type="sequence conflict" description="In Ref. 6; BAB13444." evidence="40" ref="6">
    <original>Q</original>
    <variation>K</variation>
    <location>
        <position position="1133"/>
    </location>
</feature>
<feature type="sequence conflict" description="In Ref. 6; BAB13444." evidence="40" ref="6">
    <original>V</original>
    <variation>M</variation>
    <location>
        <position position="1195"/>
    </location>
</feature>
<feature type="sequence conflict" description="In Ref. 6; BAB13444." evidence="40" ref="6">
    <original>E</original>
    <variation>Q</variation>
    <location>
        <position position="1272"/>
    </location>
</feature>
<feature type="sequence conflict" description="In Ref. 6; BAB13444." evidence="40" ref="6">
    <original>D</original>
    <variation>G</variation>
    <location>
        <position position="1331"/>
    </location>
</feature>
<feature type="sequence conflict" description="In Ref. 2; CAH56189." evidence="40" ref="2">
    <original>R</original>
    <variation>G</variation>
    <location>
        <position position="3323"/>
    </location>
</feature>
<feature type="sequence conflict" description="In Ref. 7; BAB15212." evidence="40" ref="7">
    <original>E</original>
    <variation>G</variation>
    <location>
        <position position="4220"/>
    </location>
</feature>
<feature type="sequence conflict" description="In Ref. 7; BAB15280." evidence="40" ref="7">
    <original>D</original>
    <variation>G</variation>
    <location>
        <position position="4571"/>
    </location>
</feature>
<feature type="sequence conflict" description="In Ref. 7; BAB15212." evidence="40" ref="7">
    <original>K</original>
    <variation>R</variation>
    <location>
        <position position="4853"/>
    </location>
</feature>
<feature type="sequence conflict" description="In Ref. 7; BAB15212." evidence="40" ref="7">
    <original>N</original>
    <variation>S</variation>
    <location>
        <position position="4892"/>
    </location>
</feature>
<feature type="sequence conflict" description="In Ref. 7; BAB15280." evidence="40" ref="7">
    <original>L</original>
    <variation>S</variation>
    <location>
        <position position="5139"/>
    </location>
</feature>
<feature type="sequence conflict" description="In Ref. 7; BAB15330." evidence="40" ref="7">
    <original>L</original>
    <variation>P</variation>
    <location>
        <position position="5187"/>
    </location>
</feature>
<feature type="strand" evidence="55">
    <location>
        <begin position="379"/>
        <end position="386"/>
    </location>
</feature>
<feature type="strand" evidence="55">
    <location>
        <begin position="401"/>
        <end position="405"/>
    </location>
</feature>
<feature type="strand" evidence="55">
    <location>
        <begin position="421"/>
        <end position="427"/>
    </location>
</feature>
<feature type="strand" evidence="55">
    <location>
        <begin position="430"/>
        <end position="439"/>
    </location>
</feature>
<feature type="strand" evidence="55">
    <location>
        <begin position="450"/>
        <end position="453"/>
    </location>
</feature>
<feature type="turn" evidence="55">
    <location>
        <begin position="484"/>
        <end position="486"/>
    </location>
</feature>
<feature type="strand" evidence="55">
    <location>
        <begin position="488"/>
        <end position="494"/>
    </location>
</feature>
<feature type="helix" evidence="55">
    <location>
        <begin position="523"/>
        <end position="538"/>
    </location>
</feature>
<feature type="turn" evidence="55">
    <location>
        <begin position="539"/>
        <end position="542"/>
    </location>
</feature>
<feature type="helix" evidence="55">
    <location>
        <begin position="546"/>
        <end position="564"/>
    </location>
</feature>
<feature type="helix" evidence="55">
    <location>
        <begin position="584"/>
        <end position="598"/>
    </location>
</feature>
<feature type="helix" evidence="55">
    <location>
        <begin position="619"/>
        <end position="632"/>
    </location>
</feature>
<feature type="helix" evidence="55">
    <location>
        <begin position="641"/>
        <end position="647"/>
    </location>
</feature>
<feature type="helix" evidence="55">
    <location>
        <begin position="655"/>
        <end position="666"/>
    </location>
</feature>
<feature type="strand" evidence="55">
    <location>
        <begin position="667"/>
        <end position="670"/>
    </location>
</feature>
<feature type="helix" evidence="55">
    <location>
        <begin position="672"/>
        <end position="681"/>
    </location>
</feature>
<feature type="turn" evidence="55">
    <location>
        <begin position="682"/>
        <end position="687"/>
    </location>
</feature>
<feature type="helix" evidence="55">
    <location>
        <begin position="690"/>
        <end position="694"/>
    </location>
</feature>
<feature type="helix" evidence="55">
    <location>
        <begin position="695"/>
        <end position="702"/>
    </location>
</feature>
<feature type="helix" evidence="55">
    <location>
        <begin position="711"/>
        <end position="713"/>
    </location>
</feature>
<feature type="helix" evidence="55">
    <location>
        <begin position="716"/>
        <end position="719"/>
    </location>
</feature>
<feature type="helix" evidence="55">
    <location>
        <begin position="728"/>
        <end position="733"/>
    </location>
</feature>
<feature type="helix" evidence="55">
    <location>
        <begin position="738"/>
        <end position="746"/>
    </location>
</feature>
<feature type="turn" evidence="55">
    <location>
        <begin position="747"/>
        <end position="749"/>
    </location>
</feature>
<feature type="helix" evidence="55">
    <location>
        <begin position="750"/>
        <end position="753"/>
    </location>
</feature>
<feature type="helix" evidence="55">
    <location>
        <begin position="756"/>
        <end position="764"/>
    </location>
</feature>
<feature type="helix" evidence="55">
    <location>
        <begin position="767"/>
        <end position="769"/>
    </location>
</feature>
<feature type="helix" evidence="55">
    <location>
        <begin position="771"/>
        <end position="776"/>
    </location>
</feature>
<feature type="helix" evidence="55">
    <location>
        <begin position="778"/>
        <end position="783"/>
    </location>
</feature>
<feature type="helix" evidence="55">
    <location>
        <begin position="786"/>
        <end position="796"/>
    </location>
</feature>
<feature type="helix" evidence="55">
    <location>
        <begin position="799"/>
        <end position="806"/>
    </location>
</feature>
<feature type="helix" evidence="55">
    <location>
        <begin position="811"/>
        <end position="830"/>
    </location>
</feature>
<feature type="turn" evidence="55">
    <location>
        <begin position="831"/>
        <end position="834"/>
    </location>
</feature>
<feature type="turn" evidence="55">
    <location>
        <begin position="837"/>
        <end position="839"/>
    </location>
</feature>
<feature type="helix" evidence="55">
    <location>
        <begin position="843"/>
        <end position="858"/>
    </location>
</feature>
<feature type="turn" evidence="55">
    <location>
        <begin position="863"/>
        <end position="865"/>
    </location>
</feature>
<feature type="helix" evidence="55">
    <location>
        <begin position="866"/>
        <end position="880"/>
    </location>
</feature>
<feature type="helix" evidence="55">
    <location>
        <begin position="899"/>
        <end position="917"/>
    </location>
</feature>
<feature type="strand" evidence="55">
    <location>
        <begin position="925"/>
        <end position="932"/>
    </location>
</feature>
<feature type="helix" evidence="55">
    <location>
        <begin position="935"/>
        <end position="943"/>
    </location>
</feature>
<feature type="helix" evidence="55">
    <location>
        <begin position="953"/>
        <end position="966"/>
    </location>
</feature>
<feature type="helix" evidence="55">
    <location>
        <begin position="970"/>
        <end position="979"/>
    </location>
</feature>
<feature type="helix" evidence="55">
    <location>
        <begin position="990"/>
        <end position="1008"/>
    </location>
</feature>
<feature type="helix" evidence="55">
    <location>
        <begin position="1022"/>
        <end position="1036"/>
    </location>
</feature>
<feature type="turn" evidence="55">
    <location>
        <begin position="1039"/>
        <end position="1042"/>
    </location>
</feature>
<feature type="helix" evidence="55">
    <location>
        <begin position="1044"/>
        <end position="1053"/>
    </location>
</feature>
<feature type="helix" evidence="55">
    <location>
        <begin position="1056"/>
        <end position="1066"/>
    </location>
</feature>
<feature type="helix" evidence="55">
    <location>
        <begin position="1069"/>
        <end position="1072"/>
    </location>
</feature>
<feature type="helix" evidence="55">
    <location>
        <begin position="1076"/>
        <end position="1098"/>
    </location>
</feature>
<feature type="helix" evidence="55">
    <location>
        <begin position="1103"/>
        <end position="1111"/>
    </location>
</feature>
<feature type="helix" evidence="55">
    <location>
        <begin position="1113"/>
        <end position="1124"/>
    </location>
</feature>
<feature type="helix" evidence="55">
    <location>
        <begin position="1136"/>
        <end position="1164"/>
    </location>
</feature>
<feature type="turn" evidence="55">
    <location>
        <begin position="1168"/>
        <end position="1170"/>
    </location>
</feature>
<feature type="helix" evidence="55">
    <location>
        <begin position="1178"/>
        <end position="1183"/>
    </location>
</feature>
<feature type="helix" evidence="55">
    <location>
        <begin position="1186"/>
        <end position="1188"/>
    </location>
</feature>
<feature type="helix" evidence="55">
    <location>
        <begin position="1191"/>
        <end position="1194"/>
    </location>
</feature>
<feature type="helix" evidence="55">
    <location>
        <begin position="1215"/>
        <end position="1226"/>
    </location>
</feature>
<feature type="turn" evidence="55">
    <location>
        <begin position="1227"/>
        <end position="1229"/>
    </location>
</feature>
<feature type="helix" evidence="55">
    <location>
        <begin position="1231"/>
        <end position="1236"/>
    </location>
</feature>
<feature type="helix" evidence="55">
    <location>
        <begin position="1274"/>
        <end position="1277"/>
    </location>
</feature>
<feature type="helix" evidence="55">
    <location>
        <begin position="1279"/>
        <end position="1295"/>
    </location>
</feature>
<feature type="helix" evidence="55">
    <location>
        <begin position="1300"/>
        <end position="1307"/>
    </location>
</feature>
<feature type="helix" evidence="55">
    <location>
        <begin position="1308"/>
        <end position="1310"/>
    </location>
</feature>
<feature type="helix" evidence="55">
    <location>
        <begin position="1314"/>
        <end position="1322"/>
    </location>
</feature>
<feature type="helix" evidence="55">
    <location>
        <begin position="1323"/>
        <end position="1326"/>
    </location>
</feature>
<feature type="turn" evidence="55">
    <location>
        <begin position="1337"/>
        <end position="1340"/>
    </location>
</feature>
<feature type="helix" evidence="55">
    <location>
        <begin position="1341"/>
        <end position="1365"/>
    </location>
</feature>
<feature type="helix" evidence="55">
    <location>
        <begin position="1373"/>
        <end position="1375"/>
    </location>
</feature>
<feature type="helix" evidence="55">
    <location>
        <begin position="1376"/>
        <end position="1379"/>
    </location>
</feature>
<feature type="turn" evidence="55">
    <location>
        <begin position="1380"/>
        <end position="1383"/>
    </location>
</feature>
<feature type="helix" evidence="55">
    <location>
        <begin position="1385"/>
        <end position="1389"/>
    </location>
</feature>
<feature type="helix" evidence="55">
    <location>
        <begin position="1399"/>
        <end position="1406"/>
    </location>
</feature>
<feature type="helix" evidence="55">
    <location>
        <begin position="1412"/>
        <end position="1423"/>
    </location>
</feature>
<feature type="helix" evidence="55">
    <location>
        <begin position="1426"/>
        <end position="1434"/>
    </location>
</feature>
<feature type="helix" evidence="55">
    <location>
        <begin position="1439"/>
        <end position="1450"/>
    </location>
</feature>
<feature type="helix" evidence="55">
    <location>
        <begin position="1456"/>
        <end position="1471"/>
    </location>
</feature>
<feature type="helix" evidence="55">
    <location>
        <begin position="1473"/>
        <end position="1476"/>
    </location>
</feature>
<feature type="helix" evidence="55">
    <location>
        <begin position="1485"/>
        <end position="1501"/>
    </location>
</feature>
<feature type="helix" evidence="55">
    <location>
        <begin position="1505"/>
        <end position="1514"/>
    </location>
</feature>
<feature type="helix" evidence="55">
    <location>
        <begin position="1516"/>
        <end position="1524"/>
    </location>
</feature>
<feature type="helix" evidence="55">
    <location>
        <begin position="1533"/>
        <end position="1543"/>
    </location>
</feature>
<feature type="strand" evidence="55">
    <location>
        <begin position="1545"/>
        <end position="1548"/>
    </location>
</feature>
<feature type="helix" evidence="55">
    <location>
        <begin position="1559"/>
        <end position="1562"/>
    </location>
</feature>
<feature type="strand" evidence="55">
    <location>
        <begin position="1563"/>
        <end position="1567"/>
    </location>
</feature>
<feature type="strand" evidence="55">
    <location>
        <begin position="1578"/>
        <end position="1580"/>
    </location>
</feature>
<feature type="helix" evidence="55">
    <location>
        <begin position="1582"/>
        <end position="1594"/>
    </location>
</feature>
<feature type="helix" evidence="55">
    <location>
        <begin position="1604"/>
        <end position="1628"/>
    </location>
</feature>
<feature type="helix" evidence="55">
    <location>
        <begin position="1633"/>
        <end position="1636"/>
    </location>
</feature>
<feature type="strand" evidence="55">
    <location>
        <begin position="1638"/>
        <end position="1646"/>
    </location>
</feature>
<feature type="strand" evidence="55">
    <location>
        <begin position="1649"/>
        <end position="1654"/>
    </location>
</feature>
<feature type="strand" evidence="55">
    <location>
        <begin position="1658"/>
        <end position="1660"/>
    </location>
</feature>
<feature type="strand" evidence="55">
    <location>
        <begin position="1663"/>
        <end position="1665"/>
    </location>
</feature>
<feature type="helix" evidence="55">
    <location>
        <begin position="1669"/>
        <end position="1697"/>
    </location>
</feature>
<feature type="helix" evidence="55">
    <location>
        <begin position="1700"/>
        <end position="1703"/>
    </location>
</feature>
<feature type="helix" evidence="55">
    <location>
        <begin position="1706"/>
        <end position="1716"/>
    </location>
</feature>
<feature type="strand" evidence="55">
    <location>
        <begin position="1718"/>
        <end position="1720"/>
    </location>
</feature>
<feature type="helix" evidence="55">
    <location>
        <begin position="1723"/>
        <end position="1730"/>
    </location>
</feature>
<feature type="helix" evidence="55">
    <location>
        <begin position="1738"/>
        <end position="1745"/>
    </location>
</feature>
<feature type="turn" evidence="55">
    <location>
        <begin position="1746"/>
        <end position="1748"/>
    </location>
</feature>
<feature type="helix" evidence="55">
    <location>
        <begin position="1751"/>
        <end position="1769"/>
    </location>
</feature>
<feature type="helix" evidence="55">
    <location>
        <begin position="1774"/>
        <end position="1787"/>
    </location>
</feature>
<feature type="helix" evidence="55">
    <location>
        <begin position="1789"/>
        <end position="1792"/>
    </location>
</feature>
<feature type="helix" evidence="55">
    <location>
        <begin position="1799"/>
        <end position="1812"/>
    </location>
</feature>
<feature type="strand" evidence="55">
    <location>
        <begin position="1829"/>
        <end position="1835"/>
    </location>
</feature>
<feature type="helix" evidence="55">
    <location>
        <begin position="1837"/>
        <end position="1849"/>
    </location>
</feature>
<feature type="turn" evidence="55">
    <location>
        <begin position="1859"/>
        <end position="1861"/>
    </location>
</feature>
<feature type="strand" evidence="55">
    <location>
        <begin position="1862"/>
        <end position="1864"/>
    </location>
</feature>
<feature type="helix" evidence="55">
    <location>
        <begin position="1871"/>
        <end position="1882"/>
    </location>
</feature>
<feature type="strand" evidence="55">
    <location>
        <begin position="1891"/>
        <end position="1895"/>
    </location>
</feature>
<feature type="helix" evidence="55">
    <location>
        <begin position="1897"/>
        <end position="1899"/>
    </location>
</feature>
<feature type="helix" evidence="55">
    <location>
        <begin position="1902"/>
        <end position="1917"/>
    </location>
</feature>
<feature type="strand" evidence="55">
    <location>
        <begin position="1925"/>
        <end position="1931"/>
    </location>
</feature>
<feature type="helix" evidence="55">
    <location>
        <begin position="1932"/>
        <end position="1934"/>
    </location>
</feature>
<feature type="helix" evidence="55">
    <location>
        <begin position="1938"/>
        <end position="1942"/>
    </location>
</feature>
<feature type="helix" evidence="55">
    <location>
        <begin position="1944"/>
        <end position="1946"/>
    </location>
</feature>
<feature type="strand" evidence="55">
    <location>
        <begin position="1947"/>
        <end position="1950"/>
    </location>
</feature>
<feature type="helix" evidence="55">
    <location>
        <begin position="1956"/>
        <end position="1967"/>
    </location>
</feature>
<feature type="helix" evidence="55">
    <location>
        <begin position="1976"/>
        <end position="1979"/>
    </location>
</feature>
<feature type="turn" evidence="55">
    <location>
        <begin position="1981"/>
        <end position="1983"/>
    </location>
</feature>
<feature type="strand" evidence="55">
    <location>
        <begin position="1984"/>
        <end position="1997"/>
    </location>
</feature>
<feature type="helix" evidence="55">
    <location>
        <begin position="1998"/>
        <end position="2012"/>
    </location>
</feature>
<feature type="strand" evidence="55">
    <location>
        <begin position="2020"/>
        <end position="2025"/>
    </location>
</feature>
<feature type="strand" evidence="55">
    <location>
        <begin position="2027"/>
        <end position="2029"/>
    </location>
</feature>
<feature type="helix" evidence="55">
    <location>
        <begin position="2032"/>
        <end position="2039"/>
    </location>
</feature>
<feature type="helix" evidence="55">
    <location>
        <begin position="2040"/>
        <end position="2043"/>
    </location>
</feature>
<feature type="turn" evidence="55">
    <location>
        <begin position="2045"/>
        <end position="2047"/>
    </location>
</feature>
<feature type="strand" evidence="55">
    <location>
        <begin position="2048"/>
        <end position="2050"/>
    </location>
</feature>
<feature type="strand" evidence="55">
    <location>
        <begin position="2052"/>
        <end position="2058"/>
    </location>
</feature>
<feature type="helix" evidence="55">
    <location>
        <begin position="2066"/>
        <end position="2074"/>
    </location>
</feature>
<feature type="strand" evidence="55">
    <location>
        <begin position="2078"/>
        <end position="2080"/>
    </location>
</feature>
<feature type="strand" evidence="55">
    <location>
        <begin position="2086"/>
        <end position="2088"/>
    </location>
</feature>
<feature type="strand" evidence="55">
    <location>
        <begin position="2093"/>
        <end position="2100"/>
    </location>
</feature>
<feature type="helix" evidence="55">
    <location>
        <begin position="2123"/>
        <end position="2126"/>
    </location>
</feature>
<feature type="strand" evidence="55">
    <location>
        <begin position="2129"/>
        <end position="2131"/>
    </location>
</feature>
<feature type="helix" evidence="55">
    <location>
        <begin position="2135"/>
        <end position="2141"/>
    </location>
</feature>
<feature type="helix" evidence="55">
    <location>
        <begin position="2156"/>
        <end position="2159"/>
    </location>
</feature>
<feature type="helix" evidence="55">
    <location>
        <begin position="2162"/>
        <end position="2175"/>
    </location>
</feature>
<feature type="turn" evidence="55">
    <location>
        <begin position="2180"/>
        <end position="2182"/>
    </location>
</feature>
<feature type="helix" evidence="55">
    <location>
        <begin position="2194"/>
        <end position="2204"/>
    </location>
</feature>
<feature type="helix" evidence="55">
    <location>
        <begin position="2212"/>
        <end position="2230"/>
    </location>
</feature>
<feature type="turn" evidence="55">
    <location>
        <begin position="2238"/>
        <end position="2240"/>
    </location>
</feature>
<feature type="strand" evidence="55">
    <location>
        <begin position="2241"/>
        <end position="2243"/>
    </location>
</feature>
<feature type="helix" evidence="55">
    <location>
        <begin position="2247"/>
        <end position="2263"/>
    </location>
</feature>
<feature type="strand" evidence="55">
    <location>
        <begin position="2305"/>
        <end position="2308"/>
    </location>
</feature>
<feature type="strand" evidence="55">
    <location>
        <begin position="2315"/>
        <end position="2319"/>
    </location>
</feature>
<feature type="strand" evidence="55">
    <location>
        <begin position="2321"/>
        <end position="2324"/>
    </location>
</feature>
<feature type="strand" evidence="55">
    <location>
        <begin position="2328"/>
        <end position="2333"/>
    </location>
</feature>
<feature type="turn" evidence="55">
    <location>
        <begin position="2335"/>
        <end position="2337"/>
    </location>
</feature>
<feature type="strand" evidence="55">
    <location>
        <begin position="2340"/>
        <end position="2347"/>
    </location>
</feature>
<feature type="helix" evidence="55">
    <location>
        <begin position="2348"/>
        <end position="2356"/>
    </location>
</feature>
<feature type="helix" evidence="55">
    <location>
        <begin position="2365"/>
        <end position="2367"/>
    </location>
</feature>
<feature type="helix" evidence="55">
    <location>
        <begin position="2370"/>
        <end position="2380"/>
    </location>
</feature>
<feature type="strand" evidence="55">
    <location>
        <begin position="2391"/>
        <end position="2393"/>
    </location>
</feature>
<feature type="helix" evidence="55">
    <location>
        <begin position="2397"/>
        <end position="2412"/>
    </location>
</feature>
<feature type="strand" evidence="55">
    <location>
        <begin position="2416"/>
        <end position="2419"/>
    </location>
</feature>
<feature type="helix" evidence="55">
    <location>
        <begin position="2426"/>
        <end position="2438"/>
    </location>
</feature>
<feature type="strand" evidence="55">
    <location>
        <begin position="2446"/>
        <end position="2450"/>
    </location>
</feature>
<feature type="helix" evidence="55">
    <location>
        <begin position="2457"/>
        <end position="2477"/>
    </location>
</feature>
<feature type="strand" evidence="55">
    <location>
        <begin position="2482"/>
        <end position="2487"/>
    </location>
</feature>
<feature type="helix" evidence="55">
    <location>
        <begin position="2489"/>
        <end position="2491"/>
    </location>
</feature>
<feature type="helix" evidence="55">
    <location>
        <begin position="2495"/>
        <end position="2502"/>
    </location>
</feature>
<feature type="strand" evidence="55">
    <location>
        <begin position="2514"/>
        <end position="2516"/>
    </location>
</feature>
<feature type="strand" evidence="55">
    <location>
        <begin position="2518"/>
        <end position="2524"/>
    </location>
</feature>
<feature type="helix" evidence="55">
    <location>
        <begin position="2532"/>
        <end position="2539"/>
    </location>
</feature>
<feature type="turn" evidence="55">
    <location>
        <begin position="2549"/>
        <end position="2551"/>
    </location>
</feature>
<feature type="helix" evidence="55">
    <location>
        <begin position="2561"/>
        <end position="2563"/>
    </location>
</feature>
<feature type="strand" evidence="55">
    <location>
        <begin position="2564"/>
        <end position="2566"/>
    </location>
</feature>
<feature type="turn" evidence="55">
    <location>
        <begin position="2573"/>
        <end position="2578"/>
    </location>
</feature>
<feature type="helix" evidence="55">
    <location>
        <begin position="2587"/>
        <end position="2605"/>
    </location>
</feature>
<feature type="helix" evidence="55">
    <location>
        <begin position="2609"/>
        <end position="2628"/>
    </location>
</feature>
<feature type="turn" evidence="55">
    <location>
        <begin position="2630"/>
        <end position="2632"/>
    </location>
</feature>
<feature type="helix" evidence="55">
    <location>
        <begin position="2638"/>
        <end position="2653"/>
    </location>
</feature>
<feature type="helix" evidence="55">
    <location>
        <begin position="2655"/>
        <end position="2668"/>
    </location>
</feature>
<feature type="helix" evidence="55">
    <location>
        <begin position="2680"/>
        <end position="2692"/>
    </location>
</feature>
<feature type="turn" evidence="55">
    <location>
        <begin position="2693"/>
        <end position="2696"/>
    </location>
</feature>
<feature type="helix" evidence="55">
    <location>
        <begin position="2700"/>
        <end position="2708"/>
    </location>
</feature>
<feature type="helix" evidence="55">
    <location>
        <begin position="2718"/>
        <end position="2733"/>
    </location>
</feature>
<feature type="strand" evidence="55">
    <location>
        <begin position="2734"/>
        <end position="2736"/>
    </location>
</feature>
<feature type="helix" evidence="55">
    <location>
        <begin position="2746"/>
        <end position="2760"/>
    </location>
</feature>
<feature type="strand" evidence="55">
    <location>
        <begin position="2765"/>
        <end position="2768"/>
    </location>
</feature>
<feature type="strand" evidence="55">
    <location>
        <begin position="2773"/>
        <end position="2775"/>
    </location>
</feature>
<feature type="helix" evidence="55">
    <location>
        <begin position="2776"/>
        <end position="2785"/>
    </location>
</feature>
<feature type="helix" evidence="55">
    <location>
        <begin position="2788"/>
        <end position="2790"/>
    </location>
</feature>
<feature type="helix" evidence="55">
    <location>
        <begin position="2796"/>
        <end position="2798"/>
    </location>
</feature>
<feature type="strand" evidence="55">
    <location>
        <begin position="2801"/>
        <end position="2808"/>
    </location>
</feature>
<feature type="helix" evidence="55">
    <location>
        <begin position="2815"/>
        <end position="2829"/>
    </location>
</feature>
<feature type="turn" evidence="55">
    <location>
        <begin position="2834"/>
        <end position="2836"/>
    </location>
</feature>
<feature type="strand" evidence="55">
    <location>
        <begin position="2837"/>
        <end position="2844"/>
    </location>
</feature>
<feature type="helix" evidence="55">
    <location>
        <begin position="2846"/>
        <end position="2849"/>
    </location>
</feature>
<feature type="helix" evidence="55">
    <location>
        <begin position="2857"/>
        <end position="2859"/>
    </location>
</feature>
<feature type="helix" evidence="55">
    <location>
        <begin position="2860"/>
        <end position="2866"/>
    </location>
</feature>
<feature type="strand" evidence="55">
    <location>
        <begin position="2869"/>
        <end position="2871"/>
    </location>
</feature>
<feature type="helix" evidence="55">
    <location>
        <begin position="2875"/>
        <end position="2877"/>
    </location>
</feature>
<feature type="strand" evidence="55">
    <location>
        <begin position="2880"/>
        <end position="2887"/>
    </location>
</feature>
<feature type="helix" evidence="55">
    <location>
        <begin position="2891"/>
        <end position="2893"/>
    </location>
</feature>
<feature type="turn" evidence="55">
    <location>
        <begin position="2894"/>
        <end position="2896"/>
    </location>
</feature>
<feature type="strand" evidence="55">
    <location>
        <begin position="2898"/>
        <end position="2901"/>
    </location>
</feature>
<feature type="helix" evidence="55">
    <location>
        <begin position="2907"/>
        <end position="2917"/>
    </location>
</feature>
<feature type="helix" evidence="55">
    <location>
        <begin position="2918"/>
        <end position="2920"/>
    </location>
</feature>
<feature type="helix" evidence="55">
    <location>
        <begin position="2922"/>
        <end position="2928"/>
    </location>
</feature>
<feature type="helix" evidence="55">
    <location>
        <begin position="2929"/>
        <end position="2931"/>
    </location>
</feature>
<feature type="helix" evidence="55">
    <location>
        <begin position="2932"/>
        <end position="2945"/>
    </location>
</feature>
<feature type="helix" evidence="55">
    <location>
        <begin position="2953"/>
        <end position="2970"/>
    </location>
</feature>
<feature type="helix" evidence="55">
    <location>
        <begin position="2976"/>
        <end position="2986"/>
    </location>
</feature>
<feature type="helix" evidence="55">
    <location>
        <begin position="2997"/>
        <end position="3000"/>
    </location>
</feature>
<feature type="helix" evidence="55">
    <location>
        <begin position="3014"/>
        <end position="3022"/>
    </location>
</feature>
<feature type="strand" evidence="55">
    <location>
        <begin position="3041"/>
        <end position="3047"/>
    </location>
</feature>
<feature type="helix" evidence="55">
    <location>
        <begin position="3050"/>
        <end position="3058"/>
    </location>
</feature>
<feature type="strand" evidence="55">
    <location>
        <begin position="3067"/>
        <end position="3069"/>
    </location>
</feature>
<feature type="strand" evidence="55">
    <location>
        <begin position="3074"/>
        <end position="3076"/>
    </location>
</feature>
<feature type="helix" evidence="55">
    <location>
        <begin position="3080"/>
        <end position="3096"/>
    </location>
</feature>
<feature type="strand" evidence="55">
    <location>
        <begin position="3100"/>
        <end position="3104"/>
    </location>
</feature>
<feature type="turn" evidence="55">
    <location>
        <begin position="3108"/>
        <end position="3112"/>
    </location>
</feature>
<feature type="helix" evidence="55">
    <location>
        <begin position="3113"/>
        <end position="3116"/>
    </location>
</feature>
<feature type="strand" evidence="55">
    <location>
        <begin position="3121"/>
        <end position="3123"/>
    </location>
</feature>
<feature type="strand" evidence="55">
    <location>
        <begin position="3126"/>
        <end position="3133"/>
    </location>
</feature>
<feature type="strand" evidence="55">
    <location>
        <begin position="3136"/>
        <end position="3142"/>
    </location>
</feature>
<feature type="strand" evidence="55">
    <location>
        <begin position="3148"/>
        <end position="3153"/>
    </location>
</feature>
<feature type="helix" evidence="55">
    <location>
        <begin position="3154"/>
        <end position="3160"/>
    </location>
</feature>
<feature type="helix" evidence="55">
    <location>
        <begin position="3163"/>
        <end position="3167"/>
    </location>
</feature>
<feature type="strand" evidence="55">
    <location>
        <begin position="3169"/>
        <end position="3173"/>
    </location>
</feature>
<feature type="helix" evidence="55">
    <location>
        <begin position="3176"/>
        <end position="3178"/>
    </location>
</feature>
<feature type="helix" evidence="55">
    <location>
        <begin position="3182"/>
        <end position="3199"/>
    </location>
</feature>
<feature type="helix" evidence="55">
    <location>
        <begin position="3214"/>
        <end position="3217"/>
    </location>
</feature>
<feature type="helix" evidence="55">
    <location>
        <begin position="3225"/>
        <end position="3237"/>
    </location>
</feature>
<feature type="helix" evidence="55">
    <location>
        <begin position="3244"/>
        <end position="3259"/>
    </location>
</feature>
<feature type="helix" evidence="55">
    <location>
        <begin position="3264"/>
        <end position="3273"/>
    </location>
</feature>
<feature type="helix" evidence="55">
    <location>
        <begin position="3278"/>
        <end position="3288"/>
    </location>
</feature>
<feature type="helix" evidence="55">
    <location>
        <begin position="3296"/>
        <end position="3305"/>
    </location>
</feature>
<feature type="strand" evidence="55">
    <location>
        <begin position="3312"/>
        <end position="3322"/>
    </location>
</feature>
<feature type="helix" evidence="55">
    <location>
        <begin position="3327"/>
        <end position="3336"/>
    </location>
</feature>
<feature type="turn" evidence="55">
    <location>
        <begin position="3338"/>
        <end position="3340"/>
    </location>
</feature>
<feature type="strand" evidence="55">
    <location>
        <begin position="3345"/>
        <end position="3348"/>
    </location>
</feature>
<feature type="helix" evidence="55">
    <location>
        <begin position="3349"/>
        <end position="3351"/>
    </location>
</feature>
<feature type="helix" evidence="55">
    <location>
        <begin position="3355"/>
        <end position="3366"/>
    </location>
</feature>
<feature type="strand" evidence="55">
    <location>
        <begin position="3371"/>
        <end position="3380"/>
    </location>
</feature>
<feature type="helix" evidence="55">
    <location>
        <begin position="3387"/>
        <end position="3404"/>
    </location>
</feature>
<feature type="strand" evidence="55">
    <location>
        <begin position="3411"/>
        <end position="3419"/>
    </location>
</feature>
<feature type="strand" evidence="55">
    <location>
        <begin position="3425"/>
        <end position="3427"/>
    </location>
</feature>
<feature type="strand" evidence="55">
    <location>
        <begin position="3438"/>
        <end position="3441"/>
    </location>
</feature>
<feature type="helix" evidence="55">
    <location>
        <begin position="3458"/>
        <end position="3460"/>
    </location>
</feature>
<feature type="turn" evidence="55">
    <location>
        <begin position="3463"/>
        <end position="3466"/>
    </location>
</feature>
<feature type="helix" evidence="55">
    <location>
        <begin position="3532"/>
        <end position="3544"/>
    </location>
</feature>
<feature type="strand" evidence="55">
    <location>
        <begin position="3547"/>
        <end position="3549"/>
    </location>
</feature>
<feature type="helix" evidence="55">
    <location>
        <begin position="3556"/>
        <end position="3567"/>
    </location>
</feature>
<feature type="helix" evidence="55">
    <location>
        <begin position="3573"/>
        <end position="3595"/>
    </location>
</feature>
<feature type="helix" evidence="55">
    <location>
        <begin position="3600"/>
        <end position="3602"/>
    </location>
</feature>
<feature type="helix" evidence="55">
    <location>
        <begin position="3603"/>
        <end position="3608"/>
    </location>
</feature>
<feature type="helix" evidence="55">
    <location>
        <begin position="3611"/>
        <end position="3617"/>
    </location>
</feature>
<feature type="helix" evidence="55">
    <location>
        <begin position="3620"/>
        <end position="3643"/>
    </location>
</feature>
<feature type="helix" evidence="55">
    <location>
        <begin position="3645"/>
        <end position="3647"/>
    </location>
</feature>
<feature type="helix" evidence="55">
    <location>
        <begin position="3648"/>
        <end position="3653"/>
    </location>
</feature>
<feature type="helix" evidence="55">
    <location>
        <begin position="3659"/>
        <end position="3670"/>
    </location>
</feature>
<feature type="turn" evidence="55">
    <location>
        <begin position="3672"/>
        <end position="3675"/>
    </location>
</feature>
<feature type="strand" evidence="55">
    <location>
        <begin position="3693"/>
        <end position="3695"/>
    </location>
</feature>
<feature type="helix" evidence="55">
    <location>
        <begin position="3712"/>
        <end position="3729"/>
    </location>
</feature>
<feature type="strand" evidence="55">
    <location>
        <begin position="3732"/>
        <end position="3734"/>
    </location>
</feature>
<feature type="helix" evidence="55">
    <location>
        <begin position="3735"/>
        <end position="3745"/>
    </location>
</feature>
<feature type="helix" evidence="55">
    <location>
        <begin position="3747"/>
        <end position="3752"/>
    </location>
</feature>
<feature type="helix" evidence="55">
    <location>
        <begin position="3758"/>
        <end position="3775"/>
    </location>
</feature>
<feature type="helix" evidence="55">
    <location>
        <begin position="3781"/>
        <end position="3800"/>
    </location>
</feature>
<feature type="strand" evidence="55">
    <location>
        <begin position="3802"/>
        <end position="3804"/>
    </location>
</feature>
<feature type="helix" evidence="55">
    <location>
        <begin position="3811"/>
        <end position="3820"/>
    </location>
</feature>
<feature type="helix" evidence="55">
    <location>
        <begin position="3822"/>
        <end position="3834"/>
    </location>
</feature>
<feature type="helix" evidence="55">
    <location>
        <begin position="3836"/>
        <end position="3841"/>
    </location>
</feature>
<feature type="helix" evidence="55">
    <location>
        <begin position="3858"/>
        <end position="3872"/>
    </location>
</feature>
<feature type="helix" evidence="55">
    <location>
        <begin position="3879"/>
        <end position="3888"/>
    </location>
</feature>
<feature type="helix" evidence="55">
    <location>
        <begin position="3890"/>
        <end position="3896"/>
    </location>
</feature>
<feature type="turn" evidence="55">
    <location>
        <begin position="3899"/>
        <end position="3901"/>
    </location>
</feature>
<feature type="helix" evidence="55">
    <location>
        <begin position="3907"/>
        <end position="3933"/>
    </location>
</feature>
<feature type="turn" evidence="55">
    <location>
        <begin position="3934"/>
        <end position="3936"/>
    </location>
</feature>
<feature type="helix" evidence="55">
    <location>
        <begin position="3937"/>
        <end position="3940"/>
    </location>
</feature>
<feature type="helix" evidence="55">
    <location>
        <begin position="3942"/>
        <end position="3944"/>
    </location>
</feature>
<feature type="helix" evidence="55">
    <location>
        <begin position="3945"/>
        <end position="3958"/>
    </location>
</feature>
<feature type="helix" evidence="55">
    <location>
        <begin position="3968"/>
        <end position="3989"/>
    </location>
</feature>
<feature type="turn" evidence="55">
    <location>
        <begin position="3998"/>
        <end position="4001"/>
    </location>
</feature>
<feature type="strand" evidence="55">
    <location>
        <begin position="4011"/>
        <end position="4013"/>
    </location>
</feature>
<feature type="helix" evidence="55">
    <location>
        <begin position="4018"/>
        <end position="4024"/>
    </location>
</feature>
<feature type="helix" evidence="55">
    <location>
        <begin position="4050"/>
        <end position="4075"/>
    </location>
</feature>
<feature type="strand" evidence="55">
    <location>
        <begin position="4080"/>
        <end position="4082"/>
    </location>
</feature>
<feature type="helix" evidence="55">
    <location>
        <begin position="4086"/>
        <end position="4094"/>
    </location>
</feature>
<feature type="strand" evidence="55">
    <location>
        <begin position="4097"/>
        <end position="4099"/>
    </location>
</feature>
<feature type="strand" evidence="55">
    <location>
        <begin position="4112"/>
        <end position="4114"/>
    </location>
</feature>
<feature type="strand" evidence="55">
    <location>
        <begin position="4125"/>
        <end position="4127"/>
    </location>
</feature>
<feature type="helix" evidence="55">
    <location>
        <begin position="4134"/>
        <end position="4138"/>
    </location>
</feature>
<feature type="helix" evidence="55">
    <location>
        <begin position="4143"/>
        <end position="4158"/>
    </location>
</feature>
<feature type="turn" evidence="55">
    <location>
        <begin position="4159"/>
        <end position="4161"/>
    </location>
</feature>
<feature type="helix" evidence="55">
    <location>
        <begin position="4168"/>
        <end position="4187"/>
    </location>
</feature>
<feature type="helix" evidence="55">
    <location>
        <begin position="4191"/>
        <end position="4207"/>
    </location>
</feature>
<feature type="helix" evidence="55">
    <location>
        <begin position="4223"/>
        <end position="4244"/>
    </location>
</feature>
<feature type="helix" evidence="55">
    <location>
        <begin position="4256"/>
        <end position="4269"/>
    </location>
</feature>
<feature type="helix" evidence="55">
    <location>
        <begin position="4273"/>
        <end position="4295"/>
    </location>
</feature>
<feature type="strand" evidence="55">
    <location>
        <begin position="4297"/>
        <end position="4299"/>
    </location>
</feature>
<feature type="turn" evidence="55">
    <location>
        <begin position="4308"/>
        <end position="4310"/>
    </location>
</feature>
<feature type="helix" evidence="55">
    <location>
        <begin position="4326"/>
        <end position="4330"/>
    </location>
</feature>
<feature type="helix" evidence="55">
    <location>
        <begin position="4332"/>
        <end position="4347"/>
    </location>
</feature>
<feature type="helix" evidence="55">
    <location>
        <begin position="4352"/>
        <end position="4359"/>
    </location>
</feature>
<feature type="helix" evidence="55">
    <location>
        <begin position="4364"/>
        <end position="4378"/>
    </location>
</feature>
<feature type="helix" evidence="55">
    <location>
        <begin position="4380"/>
        <end position="4384"/>
    </location>
</feature>
<feature type="helix" evidence="55">
    <location>
        <begin position="4394"/>
        <end position="4406"/>
    </location>
</feature>
<feature type="strand" evidence="55">
    <location>
        <begin position="4408"/>
        <end position="4410"/>
    </location>
</feature>
<feature type="helix" evidence="55">
    <location>
        <begin position="4413"/>
        <end position="4423"/>
    </location>
</feature>
<feature type="helix" evidence="55">
    <location>
        <begin position="4441"/>
        <end position="4456"/>
    </location>
</feature>
<feature type="helix" evidence="55">
    <location>
        <begin position="4460"/>
        <end position="4462"/>
    </location>
</feature>
<feature type="helix" evidence="55">
    <location>
        <begin position="4463"/>
        <end position="4470"/>
    </location>
</feature>
<feature type="helix" evidence="55">
    <location>
        <begin position="4472"/>
        <end position="4475"/>
    </location>
</feature>
<feature type="strand" evidence="55">
    <location>
        <begin position="4481"/>
        <end position="4483"/>
    </location>
</feature>
<feature type="strand" evidence="55">
    <location>
        <begin position="4527"/>
        <end position="4529"/>
    </location>
</feature>
<feature type="turn" evidence="55">
    <location>
        <begin position="4562"/>
        <end position="4564"/>
    </location>
</feature>
<feature type="strand" evidence="55">
    <location>
        <begin position="4571"/>
        <end position="4573"/>
    </location>
</feature>
<feature type="helix" evidence="55">
    <location>
        <begin position="4576"/>
        <end position="4596"/>
    </location>
</feature>
<feature type="helix" evidence="55">
    <location>
        <begin position="4598"/>
        <end position="4604"/>
    </location>
</feature>
<feature type="strand" evidence="55">
    <location>
        <begin position="4605"/>
        <end position="4607"/>
    </location>
</feature>
<feature type="helix" evidence="55">
    <location>
        <begin position="4612"/>
        <end position="4631"/>
    </location>
</feature>
<feature type="helix" evidence="55">
    <location>
        <begin position="4635"/>
        <end position="4651"/>
    </location>
</feature>
<feature type="helix" evidence="55">
    <location>
        <begin position="4671"/>
        <end position="4705"/>
    </location>
</feature>
<feature type="turn" evidence="55">
    <location>
        <begin position="4707"/>
        <end position="4711"/>
    </location>
</feature>
<feature type="helix" evidence="55">
    <location>
        <begin position="4713"/>
        <end position="4719"/>
    </location>
</feature>
<feature type="helix" evidence="55">
    <location>
        <begin position="4722"/>
        <end position="4724"/>
    </location>
</feature>
<feature type="strand" evidence="55">
    <location>
        <begin position="4732"/>
        <end position="4737"/>
    </location>
</feature>
<feature type="turn" evidence="55">
    <location>
        <begin position="4738"/>
        <end position="4741"/>
    </location>
</feature>
<feature type="helix" evidence="55">
    <location>
        <begin position="4749"/>
        <end position="4758"/>
    </location>
</feature>
<feature type="helix" evidence="55">
    <location>
        <begin position="4761"/>
        <end position="4764"/>
    </location>
</feature>
<feature type="helix" evidence="55">
    <location>
        <begin position="4766"/>
        <end position="4773"/>
    </location>
</feature>
<feature type="helix" evidence="55">
    <location>
        <begin position="4775"/>
        <end position="4778"/>
    </location>
</feature>
<feature type="helix" evidence="55">
    <location>
        <begin position="4779"/>
        <end position="4783"/>
    </location>
</feature>
<feature type="helix" evidence="55">
    <location>
        <begin position="4784"/>
        <end position="4797"/>
    </location>
</feature>
<feature type="helix" evidence="55">
    <location>
        <begin position="4809"/>
        <end position="4814"/>
    </location>
</feature>
<feature type="helix" evidence="55">
    <location>
        <begin position="4819"/>
        <end position="4838"/>
    </location>
</feature>
<feature type="helix" evidence="55">
    <location>
        <begin position="4840"/>
        <end position="4845"/>
    </location>
</feature>
<feature type="helix" evidence="55">
    <location>
        <begin position="4855"/>
        <end position="4857"/>
    </location>
</feature>
<feature type="strand" evidence="55">
    <location>
        <begin position="4868"/>
        <end position="4870"/>
    </location>
</feature>
<feature type="strand" evidence="55">
    <location>
        <begin position="4873"/>
        <end position="4875"/>
    </location>
</feature>
<feature type="helix" evidence="55">
    <location>
        <begin position="4878"/>
        <end position="4902"/>
    </location>
</feature>
<feature type="turn" evidence="55">
    <location>
        <begin position="4925"/>
        <end position="4928"/>
    </location>
</feature>
<feature type="helix" evidence="55">
    <location>
        <begin position="4929"/>
        <end position="4934"/>
    </location>
</feature>
<feature type="strand" evidence="55">
    <location>
        <begin position="4937"/>
        <end position="4941"/>
    </location>
</feature>
<feature type="strand" evidence="55">
    <location>
        <begin position="4943"/>
        <end position="4945"/>
    </location>
</feature>
<feature type="strand" evidence="55">
    <location>
        <begin position="4948"/>
        <end position="4951"/>
    </location>
</feature>
<feature type="helix" evidence="55">
    <location>
        <begin position="4953"/>
        <end position="4960"/>
    </location>
</feature>
<feature type="helix" evidence="55">
    <location>
        <begin position="4987"/>
        <end position="4997"/>
    </location>
</feature>
<feature type="helix" evidence="55">
    <location>
        <begin position="5005"/>
        <end position="5014"/>
    </location>
</feature>
<feature type="helix" evidence="55">
    <location>
        <begin position="5018"/>
        <end position="5037"/>
    </location>
</feature>
<feature type="helix" evidence="55">
    <location>
        <begin position="5046"/>
        <end position="5051"/>
    </location>
</feature>
<feature type="helix" evidence="55">
    <location>
        <begin position="5063"/>
        <end position="5066"/>
    </location>
</feature>
<feature type="strand" evidence="55">
    <location>
        <begin position="5067"/>
        <end position="5069"/>
    </location>
</feature>
<feature type="helix" evidence="55">
    <location>
        <begin position="5072"/>
        <end position="5074"/>
    </location>
</feature>
<feature type="helix" evidence="55">
    <location>
        <begin position="5075"/>
        <end position="5092"/>
    </location>
</feature>
<feature type="helix" evidence="55">
    <location>
        <begin position="5103"/>
        <end position="5106"/>
    </location>
</feature>
<feature type="helix" evidence="55">
    <location>
        <begin position="5111"/>
        <end position="5122"/>
    </location>
</feature>
<feature type="helix" evidence="55">
    <location>
        <begin position="5126"/>
        <end position="5140"/>
    </location>
</feature>
<feature type="helix" evidence="55">
    <location>
        <begin position="5160"/>
        <end position="5168"/>
    </location>
</feature>
<feature type="helix" evidence="55">
    <location>
        <begin position="5176"/>
        <end position="5180"/>
    </location>
</feature>
<feature type="helix" evidence="55">
    <location>
        <begin position="5187"/>
        <end position="5189"/>
    </location>
</feature>
<feature type="helix" evidence="55">
    <location>
        <begin position="5190"/>
        <end position="5204"/>
    </location>
</feature>
<keyword id="KW-0002">3D-structure</keyword>
<keyword id="KW-0025">Alternative splicing</keyword>
<keyword id="KW-0037">Angiogenesis</keyword>
<keyword id="KW-0067">ATP-binding</keyword>
<keyword id="KW-0160">Chromosomal rearrangement</keyword>
<keyword id="KW-0175">Coiled coil</keyword>
<keyword id="KW-0963">Cytoplasm</keyword>
<keyword id="KW-0225">Disease variant</keyword>
<keyword id="KW-0378">Hydrolase</keyword>
<keyword id="KW-0391">Immunity</keyword>
<keyword id="KW-1017">Isopeptide bond</keyword>
<keyword id="KW-0551">Lipid droplet</keyword>
<keyword id="KW-0443">Lipid metabolism</keyword>
<keyword id="KW-0479">Metal-binding</keyword>
<keyword id="KW-0511">Multifunctional enzyme</keyword>
<keyword id="KW-0547">Nucleotide-binding</keyword>
<keyword id="KW-0597">Phosphoprotein</keyword>
<keyword id="KW-1267">Proteomics identification</keyword>
<keyword id="KW-0656">Proto-oncogene</keyword>
<keyword id="KW-1185">Reference proteome</keyword>
<keyword id="KW-0808">Transferase</keyword>
<keyword id="KW-0832">Ubl conjugation</keyword>
<keyword id="KW-0833">Ubl conjugation pathway</keyword>
<keyword id="KW-0862">Zinc</keyword>
<keyword id="KW-0863">Zinc-finger</keyword>
<reference key="1">
    <citation type="journal article" date="2011" name="PLoS ONE">
        <title>Identification of RNF213 as a susceptibility gene for moyamoya disease and its possible role in vascular development.</title>
        <authorList>
            <person name="Liu W."/>
            <person name="Morito D."/>
            <person name="Takashima S."/>
            <person name="Mineharu Y."/>
            <person name="Kobayashi H."/>
            <person name="Hitomi T."/>
            <person name="Hashikata H."/>
            <person name="Matsuura N."/>
            <person name="Yamazaki S."/>
            <person name="Toyoda A."/>
            <person name="Kikuta K."/>
            <person name="Takagi Y."/>
            <person name="Harada K.H."/>
            <person name="Fujiyama A."/>
            <person name="Herzig R."/>
            <person name="Krischek B."/>
            <person name="Zou L."/>
            <person name="Kim J.E."/>
            <person name="Kitakaze M."/>
            <person name="Miyamoto S."/>
            <person name="Nagata K."/>
            <person name="Hashimoto N."/>
            <person name="Koizumi A."/>
        </authorList>
    </citation>
    <scope>NUCLEOTIDE SEQUENCE [MRNA] (ISOFORM 1)</scope>
    <scope>FUNCTION</scope>
    <scope>CATALYTIC ACTIVITY</scope>
    <scope>AUTOUBIQUITINATION</scope>
    <scope>SUBCELLULAR LOCATION</scope>
    <scope>TISSUE SPECIFICITY</scope>
    <scope>VARIANTS ASP-3962; GLN-4062; SER-4608; ASN-4863; ASP-4950; VAL-5021; GLU-5160 AND GLY-5176</scope>
    <scope>VARIANTS MYMY2 ASN-4013 AND LYS-4810</scope>
</reference>
<reference key="2">
    <citation type="journal article" date="2007" name="BMC Genomics">
        <title>The full-ORF clone resource of the German cDNA consortium.</title>
        <authorList>
            <person name="Bechtel S."/>
            <person name="Rosenfelder H."/>
            <person name="Duda A."/>
            <person name="Schmidt C.P."/>
            <person name="Ernst U."/>
            <person name="Wellenreuther R."/>
            <person name="Mehrle A."/>
            <person name="Schuster C."/>
            <person name="Bahr A."/>
            <person name="Bloecker H."/>
            <person name="Heubner D."/>
            <person name="Hoerlein A."/>
            <person name="Michel G."/>
            <person name="Wedler H."/>
            <person name="Koehrer K."/>
            <person name="Ottenwaelder B."/>
            <person name="Poustka A."/>
            <person name="Wiemann S."/>
            <person name="Schupp I."/>
        </authorList>
    </citation>
    <scope>NUCLEOTIDE SEQUENCE [LARGE SCALE MRNA] (ISOFORM 3)</scope>
    <scope>NUCLEOTIDE SEQUENCE [LARGE SCALE MRNA] OF 3021-5207 (ISOFORMS 1/2)</scope>
    <source>
        <tissue>Endometrium</tissue>
        <tissue>Lymph node</tissue>
        <tissue>Melanoma</tissue>
        <tissue>Uterus</tissue>
    </source>
</reference>
<reference key="3">
    <citation type="journal article" date="2006" name="Nature">
        <title>DNA sequence of human chromosome 17 and analysis of rearrangement in the human lineage.</title>
        <authorList>
            <person name="Zody M.C."/>
            <person name="Garber M."/>
            <person name="Adams D.J."/>
            <person name="Sharpe T."/>
            <person name="Harrow J."/>
            <person name="Lupski J.R."/>
            <person name="Nicholson C."/>
            <person name="Searle S.M."/>
            <person name="Wilming L."/>
            <person name="Young S.K."/>
            <person name="Abouelleil A."/>
            <person name="Allen N.R."/>
            <person name="Bi W."/>
            <person name="Bloom T."/>
            <person name="Borowsky M.L."/>
            <person name="Bugalter B.E."/>
            <person name="Butler J."/>
            <person name="Chang J.L."/>
            <person name="Chen C.-K."/>
            <person name="Cook A."/>
            <person name="Corum B."/>
            <person name="Cuomo C.A."/>
            <person name="de Jong P.J."/>
            <person name="DeCaprio D."/>
            <person name="Dewar K."/>
            <person name="FitzGerald M."/>
            <person name="Gilbert J."/>
            <person name="Gibson R."/>
            <person name="Gnerre S."/>
            <person name="Goldstein S."/>
            <person name="Grafham D.V."/>
            <person name="Grocock R."/>
            <person name="Hafez N."/>
            <person name="Hagopian D.S."/>
            <person name="Hart E."/>
            <person name="Norman C.H."/>
            <person name="Humphray S."/>
            <person name="Jaffe D.B."/>
            <person name="Jones M."/>
            <person name="Kamal M."/>
            <person name="Khodiyar V.K."/>
            <person name="LaButti K."/>
            <person name="Laird G."/>
            <person name="Lehoczky J."/>
            <person name="Liu X."/>
            <person name="Lokyitsang T."/>
            <person name="Loveland J."/>
            <person name="Lui A."/>
            <person name="Macdonald P."/>
            <person name="Major J.E."/>
            <person name="Matthews L."/>
            <person name="Mauceli E."/>
            <person name="McCarroll S.A."/>
            <person name="Mihalev A.H."/>
            <person name="Mudge J."/>
            <person name="Nguyen C."/>
            <person name="Nicol R."/>
            <person name="O'Leary S.B."/>
            <person name="Osoegawa K."/>
            <person name="Schwartz D.C."/>
            <person name="Shaw-Smith C."/>
            <person name="Stankiewicz P."/>
            <person name="Steward C."/>
            <person name="Swarbreck D."/>
            <person name="Venkataraman V."/>
            <person name="Whittaker C.A."/>
            <person name="Yang X."/>
            <person name="Zimmer A.R."/>
            <person name="Bradley A."/>
            <person name="Hubbard T."/>
            <person name="Birren B.W."/>
            <person name="Rogers J."/>
            <person name="Lander E.S."/>
            <person name="Nusbaum C."/>
        </authorList>
    </citation>
    <scope>NUCLEOTIDE SEQUENCE [LARGE SCALE GENOMIC DNA]</scope>
</reference>
<reference key="4">
    <citation type="journal article" date="2004" name="Genome Res.">
        <title>The status, quality, and expansion of the NIH full-length cDNA project: the Mammalian Gene Collection (MGC).</title>
        <authorList>
            <consortium name="The MGC Project Team"/>
        </authorList>
    </citation>
    <scope>NUCLEOTIDE SEQUENCE [LARGE SCALE MRNA] (ISOFORMS 3 AND 4)</scope>
    <source>
        <tissue>Eye</tissue>
        <tissue>Lung</tissue>
    </source>
</reference>
<reference key="5">
    <citation type="journal article" date="2002" name="Genes Chromosomes Cancer">
        <title>Identification of novel fusion partners of ALK, the anaplastic lymphoma kinase, in anaplastic large-cell lymphoma and inflammatory myofibroblastic tumor.</title>
        <authorList>
            <person name="Cools J."/>
            <person name="Wlodarska I."/>
            <person name="Somers R."/>
            <person name="Mentens N."/>
            <person name="Pedeutour F."/>
            <person name="Maes B."/>
            <person name="De Wolf-Peeters C."/>
            <person name="Pauwels P."/>
            <person name="Hagemeijer A."/>
            <person name="Marynen P."/>
        </authorList>
    </citation>
    <scope>NUCLEOTIDE SEQUENCE [MRNA] OF 1-163 (ISOFORMS 1 AND 2/3)</scope>
    <scope>CHROMOSOMAL TRANSLOCATION WITH ALK</scope>
</reference>
<reference key="6">
    <citation type="journal article" date="2000" name="DNA Res.">
        <title>Prediction of the coding sequences of unidentified human genes. XVIII. The complete sequences of 100 new cDNA clones from brain which code for large proteins in vitro.</title>
        <authorList>
            <person name="Nagase T."/>
            <person name="Kikuno R."/>
            <person name="Nakayama M."/>
            <person name="Hirosawa M."/>
            <person name="Ohara O."/>
        </authorList>
    </citation>
    <scope>NUCLEOTIDE SEQUENCE [LARGE SCALE MRNA] OF 136-1509 AND 3888-5207 (ISOFORMS 1/2)</scope>
    <source>
        <tissue>Brain</tissue>
    </source>
</reference>
<reference key="7">
    <citation type="journal article" date="2004" name="Nat. Genet.">
        <title>Complete sequencing and characterization of 21,243 full-length human cDNAs.</title>
        <authorList>
            <person name="Ota T."/>
            <person name="Suzuki Y."/>
            <person name="Nishikawa T."/>
            <person name="Otsuki T."/>
            <person name="Sugiyama T."/>
            <person name="Irie R."/>
            <person name="Wakamatsu A."/>
            <person name="Hayashi K."/>
            <person name="Sato H."/>
            <person name="Nagai K."/>
            <person name="Kimura K."/>
            <person name="Makita H."/>
            <person name="Sekine M."/>
            <person name="Obayashi M."/>
            <person name="Nishi T."/>
            <person name="Shibahara T."/>
            <person name="Tanaka T."/>
            <person name="Ishii S."/>
            <person name="Yamamoto J."/>
            <person name="Saito K."/>
            <person name="Kawai Y."/>
            <person name="Isono Y."/>
            <person name="Nakamura Y."/>
            <person name="Nagahari K."/>
            <person name="Murakami K."/>
            <person name="Yasuda T."/>
            <person name="Iwayanagi T."/>
            <person name="Wagatsuma M."/>
            <person name="Shiratori A."/>
            <person name="Sudo H."/>
            <person name="Hosoiri T."/>
            <person name="Kaku Y."/>
            <person name="Kodaira H."/>
            <person name="Kondo H."/>
            <person name="Sugawara M."/>
            <person name="Takahashi M."/>
            <person name="Kanda K."/>
            <person name="Yokoi T."/>
            <person name="Furuya T."/>
            <person name="Kikkawa E."/>
            <person name="Omura Y."/>
            <person name="Abe K."/>
            <person name="Kamihara K."/>
            <person name="Katsuta N."/>
            <person name="Sato K."/>
            <person name="Tanikawa M."/>
            <person name="Yamazaki M."/>
            <person name="Ninomiya K."/>
            <person name="Ishibashi T."/>
            <person name="Yamashita H."/>
            <person name="Murakawa K."/>
            <person name="Fujimori K."/>
            <person name="Tanai H."/>
            <person name="Kimata M."/>
            <person name="Watanabe M."/>
            <person name="Hiraoka S."/>
            <person name="Chiba Y."/>
            <person name="Ishida S."/>
            <person name="Ono Y."/>
            <person name="Takiguchi S."/>
            <person name="Watanabe S."/>
            <person name="Yosida M."/>
            <person name="Hotuta T."/>
            <person name="Kusano J."/>
            <person name="Kanehori K."/>
            <person name="Takahashi-Fujii A."/>
            <person name="Hara H."/>
            <person name="Tanase T.-O."/>
            <person name="Nomura Y."/>
            <person name="Togiya S."/>
            <person name="Komai F."/>
            <person name="Hara R."/>
            <person name="Takeuchi K."/>
            <person name="Arita M."/>
            <person name="Imose N."/>
            <person name="Musashino K."/>
            <person name="Yuuki H."/>
            <person name="Oshima A."/>
            <person name="Sasaki N."/>
            <person name="Aotsuka S."/>
            <person name="Yoshikawa Y."/>
            <person name="Matsunawa H."/>
            <person name="Ichihara T."/>
            <person name="Shiohata N."/>
            <person name="Sano S."/>
            <person name="Moriya S."/>
            <person name="Momiyama H."/>
            <person name="Satoh N."/>
            <person name="Takami S."/>
            <person name="Terashima Y."/>
            <person name="Suzuki O."/>
            <person name="Nakagawa S."/>
            <person name="Senoh A."/>
            <person name="Mizoguchi H."/>
            <person name="Goto Y."/>
            <person name="Shimizu F."/>
            <person name="Wakebe H."/>
            <person name="Hishigaki H."/>
            <person name="Watanabe T."/>
            <person name="Sugiyama A."/>
            <person name="Takemoto M."/>
            <person name="Kawakami B."/>
            <person name="Yamazaki M."/>
            <person name="Watanabe K."/>
            <person name="Kumagai A."/>
            <person name="Itakura S."/>
            <person name="Fukuzumi Y."/>
            <person name="Fujimori Y."/>
            <person name="Komiyama M."/>
            <person name="Tashiro H."/>
            <person name="Tanigami A."/>
            <person name="Fujiwara T."/>
            <person name="Ono T."/>
            <person name="Yamada K."/>
            <person name="Fujii Y."/>
            <person name="Ozaki K."/>
            <person name="Hirao M."/>
            <person name="Ohmori Y."/>
            <person name="Kawabata A."/>
            <person name="Hikiji T."/>
            <person name="Kobatake N."/>
            <person name="Inagaki H."/>
            <person name="Ikema Y."/>
            <person name="Okamoto S."/>
            <person name="Okitani R."/>
            <person name="Kawakami T."/>
            <person name="Noguchi S."/>
            <person name="Itoh T."/>
            <person name="Shigeta K."/>
            <person name="Senba T."/>
            <person name="Matsumura K."/>
            <person name="Nakajima Y."/>
            <person name="Mizuno T."/>
            <person name="Morinaga M."/>
            <person name="Sasaki M."/>
            <person name="Togashi T."/>
            <person name="Oyama M."/>
            <person name="Hata H."/>
            <person name="Watanabe M."/>
            <person name="Komatsu T."/>
            <person name="Mizushima-Sugano J."/>
            <person name="Satoh T."/>
            <person name="Shirai Y."/>
            <person name="Takahashi Y."/>
            <person name="Nakagawa K."/>
            <person name="Okumura K."/>
            <person name="Nagase T."/>
            <person name="Nomura N."/>
            <person name="Kikuchi H."/>
            <person name="Masuho Y."/>
            <person name="Yamashita R."/>
            <person name="Nakai K."/>
            <person name="Yada T."/>
            <person name="Nakamura Y."/>
            <person name="Ohara O."/>
            <person name="Isogai T."/>
            <person name="Sugano S."/>
        </authorList>
    </citation>
    <scope>NUCLEOTIDE SEQUENCE [LARGE SCALE MRNA] OF 3770-5207 (ISOFORMS 1/2)</scope>
    <source>
        <tissue>Spleen</tissue>
        <tissue>Thyroid</tissue>
    </source>
</reference>
<reference key="8">
    <citation type="journal article" date="2008" name="Mol. Cell">
        <title>Kinase-selective enrichment enables quantitative phosphoproteomics of the kinome across the cell cycle.</title>
        <authorList>
            <person name="Daub H."/>
            <person name="Olsen J.V."/>
            <person name="Bairlein M."/>
            <person name="Gnad F."/>
            <person name="Oppermann F.S."/>
            <person name="Korner R."/>
            <person name="Greff Z."/>
            <person name="Keri G."/>
            <person name="Stemmann O."/>
            <person name="Mann M."/>
        </authorList>
    </citation>
    <scope>PHOSPHORYLATION [LARGE SCALE ANALYSIS] AT SER-1258</scope>
    <scope>IDENTIFICATION BY MASS SPECTROMETRY [LARGE SCALE ANALYSIS]</scope>
    <source>
        <tissue>Cervix carcinoma</tissue>
    </source>
</reference>
<reference key="9">
    <citation type="journal article" date="2008" name="Proc. Natl. Acad. Sci. U.S.A.">
        <title>A quantitative atlas of mitotic phosphorylation.</title>
        <authorList>
            <person name="Dephoure N."/>
            <person name="Zhou C."/>
            <person name="Villen J."/>
            <person name="Beausoleil S.A."/>
            <person name="Bakalarski C.E."/>
            <person name="Elledge S.J."/>
            <person name="Gygi S.P."/>
        </authorList>
    </citation>
    <scope>PHOSPHORYLATION [LARGE SCALE ANALYSIS] AT SER-1258</scope>
    <scope>IDENTIFICATION BY MASS SPECTROMETRY [LARGE SCALE ANALYSIS]</scope>
    <source>
        <tissue>Cervix carcinoma</tissue>
    </source>
</reference>
<reference key="10">
    <citation type="journal article" date="2008" name="Proteomics">
        <title>Large-scale phosphoproteome analysis of human liver tissue by enrichment and fractionation of phosphopeptides with strong anion exchange chromatography.</title>
        <authorList>
            <person name="Han G."/>
            <person name="Ye M."/>
            <person name="Zhou H."/>
            <person name="Jiang X."/>
            <person name="Feng S."/>
            <person name="Jiang X."/>
            <person name="Tian R."/>
            <person name="Wan D."/>
            <person name="Zou H."/>
            <person name="Gu J."/>
        </authorList>
    </citation>
    <scope>PHOSPHORYLATION [LARGE SCALE ANALYSIS] AT SER-1258</scope>
    <scope>IDENTIFICATION BY MASS SPECTROMETRY [LARGE SCALE ANALYSIS]</scope>
    <source>
        <tissue>Liver</tissue>
    </source>
</reference>
<reference key="11">
    <citation type="journal article" date="2009" name="Mol. Cell. Proteomics">
        <title>Large-scale proteomics analysis of the human kinome.</title>
        <authorList>
            <person name="Oppermann F.S."/>
            <person name="Gnad F."/>
            <person name="Olsen J.V."/>
            <person name="Hornberger R."/>
            <person name="Greff Z."/>
            <person name="Keri G."/>
            <person name="Mann M."/>
            <person name="Daub H."/>
        </authorList>
    </citation>
    <scope>PHOSPHORYLATION [LARGE SCALE ANALYSIS] AT SER-1258</scope>
    <scope>IDENTIFICATION BY MASS SPECTROMETRY [LARGE SCALE ANALYSIS]</scope>
</reference>
<reference key="12">
    <citation type="journal article" date="2009" name="Sci. Signal.">
        <title>Quantitative phosphoproteomic analysis of T cell receptor signaling reveals system-wide modulation of protein-protein interactions.</title>
        <authorList>
            <person name="Mayya V."/>
            <person name="Lundgren D.H."/>
            <person name="Hwang S.-I."/>
            <person name="Rezaul K."/>
            <person name="Wu L."/>
            <person name="Eng J.K."/>
            <person name="Rodionov V."/>
            <person name="Han D.K."/>
        </authorList>
    </citation>
    <scope>PHOSPHORYLATION [LARGE SCALE ANALYSIS] AT SER-1258</scope>
    <scope>IDENTIFICATION BY MASS SPECTROMETRY [LARGE SCALE ANALYSIS]</scope>
    <source>
        <tissue>Leukemic T-cell</tissue>
    </source>
</reference>
<reference key="13">
    <citation type="journal article" date="2010" name="PLoS ONE">
        <title>Secreted Mycobacterium tuberculosis Rv3654c and Rv3655c proteins participate in the suppression of macrophage apoptosis.</title>
        <authorList>
            <person name="Danelishvili L."/>
            <person name="Yamazaki Y."/>
            <person name="Selker J."/>
            <person name="Bermudez L.E."/>
        </authorList>
    </citation>
    <scope>INTERACTION WITH M.TUBERCULOSIS RV3655C (MICROBIAL INFECTION)</scope>
    <scope>INDUCTION (MICROBIAL INFECTION)</scope>
</reference>
<reference key="14">
    <citation type="journal article" date="2010" name="Sci. Signal.">
        <title>Quantitative phosphoproteomics reveals widespread full phosphorylation site occupancy during mitosis.</title>
        <authorList>
            <person name="Olsen J.V."/>
            <person name="Vermeulen M."/>
            <person name="Santamaria A."/>
            <person name="Kumar C."/>
            <person name="Miller M.L."/>
            <person name="Jensen L.J."/>
            <person name="Gnad F."/>
            <person name="Cox J."/>
            <person name="Jensen T.S."/>
            <person name="Nigg E.A."/>
            <person name="Brunak S."/>
            <person name="Mann M."/>
        </authorList>
    </citation>
    <scope>PHOSPHORYLATION [LARGE SCALE ANALYSIS] AT SER-217 AND SER-1258</scope>
    <scope>IDENTIFICATION BY MASS SPECTROMETRY [LARGE SCALE ANALYSIS]</scope>
    <source>
        <tissue>Cervix carcinoma</tissue>
    </source>
</reference>
<reference key="15">
    <citation type="journal article" date="2011" name="BMC Syst. Biol.">
        <title>Initial characterization of the human central proteome.</title>
        <authorList>
            <person name="Burkard T.R."/>
            <person name="Planyavsky M."/>
            <person name="Kaupe I."/>
            <person name="Breitwieser F.P."/>
            <person name="Buerckstuemmer T."/>
            <person name="Bennett K.L."/>
            <person name="Superti-Furga G."/>
            <person name="Colinge J."/>
        </authorList>
    </citation>
    <scope>IDENTIFICATION BY MASS SPECTROMETRY [LARGE SCALE ANALYSIS]</scope>
</reference>
<reference key="16">
    <citation type="journal article" date="2011" name="Sci. Signal.">
        <title>System-wide temporal characterization of the proteome and phosphoproteome of human embryonic stem cell differentiation.</title>
        <authorList>
            <person name="Rigbolt K.T."/>
            <person name="Prokhorova T.A."/>
            <person name="Akimov V."/>
            <person name="Henningsen J."/>
            <person name="Johansen P.T."/>
            <person name="Kratchmarova I."/>
            <person name="Kassem M."/>
            <person name="Mann M."/>
            <person name="Olsen J.V."/>
            <person name="Blagoev B."/>
        </authorList>
    </citation>
    <scope>PHOSPHORYLATION [LARGE SCALE ANALYSIS] AT SER-1258</scope>
    <scope>IDENTIFICATION BY MASS SPECTROMETRY [LARGE SCALE ANALYSIS]</scope>
</reference>
<reference key="17">
    <citation type="journal article" date="2013" name="J. Proteome Res.">
        <title>Toward a comprehensive characterization of a human cancer cell phosphoproteome.</title>
        <authorList>
            <person name="Zhou H."/>
            <person name="Di Palma S."/>
            <person name="Preisinger C."/>
            <person name="Peng M."/>
            <person name="Polat A.N."/>
            <person name="Heck A.J."/>
            <person name="Mohammed S."/>
        </authorList>
    </citation>
    <scope>PHOSPHORYLATION [LARGE SCALE ANALYSIS] AT SER-217; SER-1258 AND SER-2273</scope>
    <scope>IDENTIFICATION BY MASS SPECTROMETRY [LARGE SCALE ANALYSIS]</scope>
    <source>
        <tissue>Cervix carcinoma</tissue>
        <tissue>Erythroleukemia</tissue>
    </source>
</reference>
<reference key="18">
    <citation type="journal article" date="2014" name="J. Proteomics">
        <title>An enzyme assisted RP-RPLC approach for in-depth analysis of human liver phosphoproteome.</title>
        <authorList>
            <person name="Bian Y."/>
            <person name="Song C."/>
            <person name="Cheng K."/>
            <person name="Dong M."/>
            <person name="Wang F."/>
            <person name="Huang J."/>
            <person name="Sun D."/>
            <person name="Wang L."/>
            <person name="Ye M."/>
            <person name="Zou H."/>
        </authorList>
    </citation>
    <scope>PHOSPHORYLATION [LARGE SCALE ANALYSIS] AT SER-208; SER-217 AND SER-1258</scope>
    <scope>IDENTIFICATION BY MASS SPECTROMETRY [LARGE SCALE ANALYSIS]</scope>
    <source>
        <tissue>Liver</tissue>
    </source>
</reference>
<reference key="19">
    <citation type="journal article" date="2014" name="Nat. Struct. Mol. Biol.">
        <title>Uncovering global SUMOylation signaling networks in a site-specific manner.</title>
        <authorList>
            <person name="Hendriks I.A."/>
            <person name="D'Souza R.C."/>
            <person name="Yang B."/>
            <person name="Verlaan-de Vries M."/>
            <person name="Mann M."/>
            <person name="Vertegaal A.C."/>
        </authorList>
    </citation>
    <scope>SUMOYLATION [LARGE SCALE ANALYSIS] AT LYS-1151</scope>
    <scope>IDENTIFICATION BY MASS SPECTROMETRY [LARGE SCALE ANALYSIS]</scope>
</reference>
<reference key="20">
    <citation type="journal article" date="2014" name="Sci. Rep.">
        <title>Moyamoya disease-associated protein mysterin/RNF213 is a novel AAA+ ATPase, which dynamically changes its oligomeric state.</title>
        <authorList>
            <person name="Morito D."/>
            <person name="Nishikawa K."/>
            <person name="Hoseki J."/>
            <person name="Kitamura A."/>
            <person name="Kotani Y."/>
            <person name="Kiso K."/>
            <person name="Kinjo M."/>
            <person name="Fujiyoshi Y."/>
            <person name="Nagata K."/>
        </authorList>
    </citation>
    <scope>FUNCTION</scope>
    <scope>CATALYTIC ACTIVITY</scope>
    <scope>MUTAGENESIS OF LYS-2426; GLU-2488; LYS-2775 AND GLU-2845</scope>
</reference>
<reference key="21">
    <citation type="journal article" date="2015" name="J. Stroke Cerebrovasc. Dis.">
        <title>Elevated serum microRNA Let-7c in Moyamoya disease.</title>
        <authorList>
            <person name="Zhao S."/>
            <person name="Gong Z."/>
            <person name="Zhang J."/>
            <person name="Xu X."/>
            <person name="Liu P."/>
            <person name="Guan W."/>
            <person name="Jing L."/>
            <person name="Peng T."/>
            <person name="Teng J."/>
            <person name="Jia Y."/>
        </authorList>
    </citation>
    <scope>INDUCTION</scope>
</reference>
<reference key="22">
    <citation type="journal article" date="2015" name="Sci. Rep.">
        <title>Moyamoya disease susceptibility gene RNF213 links inflammatory and angiogenic signals in endothelial cells.</title>
        <authorList>
            <person name="Ohkubo K."/>
            <person name="Sakai Y."/>
            <person name="Inoue H."/>
            <person name="Akamine S."/>
            <person name="Ishizaki Y."/>
            <person name="Matsushita Y."/>
            <person name="Sanefuji M."/>
            <person name="Torisu H."/>
            <person name="Ihara K."/>
            <person name="Sardiello M."/>
            <person name="Hara T."/>
        </authorList>
    </citation>
    <scope>FUNCTION</scope>
    <scope>INDUCTION</scope>
</reference>
<reference key="23">
    <citation type="journal article" date="2016" name="Dev. Cell">
        <title>Endothelial RSPO3 controls vascular stability and pruning through non-canonical WNT/Ca(2+)/NFAT signaling.</title>
        <authorList>
            <person name="Scholz B."/>
            <person name="Korn C."/>
            <person name="Wojtarowicz J."/>
            <person name="Mogler C."/>
            <person name="Augustin I."/>
            <person name="Boutros M."/>
            <person name="Niehrs C."/>
            <person name="Augustin H.G."/>
        </authorList>
    </citation>
    <scope>FUNCTION</scope>
</reference>
<reference key="24">
    <citation type="journal article" date="2019" name="J. Cell Biol.">
        <title>The AAA+ ATPase/ubiquitin ligase mysterin stabilizes cytoplasmic lipid droplets.</title>
        <authorList>
            <person name="Sugihara M."/>
            <person name="Morito D."/>
            <person name="Ainuki S."/>
            <person name="Hirano Y."/>
            <person name="Ogino K."/>
            <person name="Kitamura A."/>
            <person name="Hirata H."/>
            <person name="Nagata K."/>
        </authorList>
    </citation>
    <scope>FUNCTION</scope>
    <scope>SUBCELLULAR LOCATION</scope>
    <scope>MUTAGENESIS OF LYS-2426; GLU-2488; LYS-2775 AND GLU-2845</scope>
</reference>
<reference key="25">
    <citation type="journal article" date="2019" name="Mol. Cell">
        <title>Probing the global cellular responses to lipotoxicity caused by saturated fatty acids.</title>
        <authorList>
            <person name="Piccolis M."/>
            <person name="Bond L.M."/>
            <person name="Kampmann M."/>
            <person name="Pulimeno P."/>
            <person name="Chitraju C."/>
            <person name="Jayson C.B.K."/>
            <person name="Vaites L.P."/>
            <person name="Boland S."/>
            <person name="Lai Z.W."/>
            <person name="Gabriel K.R."/>
            <person name="Elliott S.D."/>
            <person name="Paulo J.A."/>
            <person name="Harper J.W."/>
            <person name="Weissman J.S."/>
            <person name="Walther T.C."/>
            <person name="Farese R.V. Jr."/>
        </authorList>
    </citation>
    <scope>FUNCTION</scope>
</reference>
<reference key="26">
    <citation type="journal article" date="2020" name="Biochem. Biophys. Res. Commun.">
        <title>Moyamoya disease patient mutations in the RING domain of RNF213 reduce its ubiquitin ligase activity and enhance NFkappaB activation and apoptosis in an AAA+ domain-dependent manner.</title>
        <authorList>
            <person name="Takeda M."/>
            <person name="Tezuka T."/>
            <person name="Kim M."/>
            <person name="Choi J."/>
            <person name="Oichi Y."/>
            <person name="Kobayashi H."/>
            <person name="Harada K.H."/>
            <person name="Mizushima T."/>
            <person name="Taketani S."/>
            <person name="Koizumi A."/>
            <person name="Youssefian S."/>
        </authorList>
    </citation>
    <scope>FUNCTION</scope>
    <scope>CATALYTIC ACTIVITY</scope>
    <scope>PATHWAY</scope>
    <scope>INTERACTION WITH UBE2N</scope>
    <scope>CHARACTERIZATION OF VARIANTS TYR-3997; ARG-4007; ASN-4014; SER-4017; CYS-4019; ARG-4024; ARG-4032 AND LEU-4033</scope>
    <scope>VARIANT MYMY2 ASN-4013</scope>
</reference>
<reference key="27">
    <citation type="journal article" date="2021" name="FASEB Bioadv.">
        <title>UBC13 is an RNF213-associated E2 ubiquitin-conjugating enzyme, and Lysine 63-linked ubiquitination by the RNF213-UBC13 axis is responsible for angiogenic activity.</title>
        <authorList>
            <person name="Habu T."/>
            <person name="Harada K.H."/>
        </authorList>
    </citation>
    <scope>FUNCTION</scope>
    <scope>CATALYTIC ACTIVITY</scope>
    <scope>PATHWAY</scope>
    <scope>INTERACTION WITH UBE2N</scope>
</reference>
<reference key="28">
    <citation type="journal article" date="2021" name="Nature">
        <title>Ubiquitylation of lipopolysaccharide by RNF213 during bacterial infection.</title>
        <authorList>
            <person name="Otten E.G."/>
            <person name="Werner E."/>
            <person name="Crespillo-Casado A."/>
            <person name="Boyle K.B."/>
            <person name="Dharamdasani V."/>
            <person name="Pathe C."/>
            <person name="Santhanam B."/>
            <person name="Randow F."/>
        </authorList>
    </citation>
    <scope>FUNCTION</scope>
    <scope>SUBCELLULAR LOCATION</scope>
    <scope>DOMAIN</scope>
    <scope>CHARACTERIZATION OF VARIANTS ASN-4014; ARG-4024; ILE-4638; ASP-4950 AND VAL-5021</scope>
    <scope>CHARACTERIZATION OF VARIANT MYMY2 LYS-4810</scope>
    <scope>MUTAGENESIS OF LYS-2426; GLU-2488; LYS-2775; GLU-2845 AND HIS-4509</scope>
</reference>
<reference key="29">
    <citation type="journal article" date="2011" name="J. Hum. Genet.">
        <title>A genome-wide association study identifies RNF213 as the first Moyamoya disease gene.</title>
        <authorList>
            <person name="Kamada F."/>
            <person name="Aoki Y."/>
            <person name="Narisawa A."/>
            <person name="Abe Y."/>
            <person name="Komatsuzaki S."/>
            <person name="Kikuchi A."/>
            <person name="Kanno J."/>
            <person name="Niihori T."/>
            <person name="Ono M."/>
            <person name="Ishii N."/>
            <person name="Owada Y."/>
            <person name="Fujimura M."/>
            <person name="Mashimo Y."/>
            <person name="Suzuki Y."/>
            <person name="Hata A."/>
            <person name="Tsuchiya S."/>
            <person name="Tominaga T."/>
            <person name="Matsubara Y."/>
            <person name="Kure S."/>
        </authorList>
    </citation>
    <scope>VARIANTS GLU-2554; VAL-3891; GLY-3915; MET-4567 AND MET-4765</scope>
    <scope>VARIANTS MYMY2 THR-4399 AND LYS-4810</scope>
</reference>
<reference key="30">
    <citation type="journal article" date="2012" name="J. Hum. Genet.">
        <title>Sibling cases of moyamoya disease having homozygous and heterozygous c.14576G&gt;A variant in RNF213 showed varying clinical course and severity.</title>
        <authorList>
            <person name="Miyatake S."/>
            <person name="Touho H."/>
            <person name="Miyake N."/>
            <person name="Ohba C."/>
            <person name="Doi H."/>
            <person name="Saitsu H."/>
            <person name="Taguri M."/>
            <person name="Morita S."/>
            <person name="Matsumoto N."/>
        </authorList>
    </citation>
    <scope>VARIANT MYMY2 LYS-4810</scope>
</reference>
<reference key="31">
    <citation type="journal article" date="2012" name="Neurol. Med. Chir.">
        <title>Temporal profile of de novo development of moyamoya vasculopathy in an adult: case report.</title>
        <authorList>
            <person name="Shimoda Y."/>
            <person name="Fujimura M."/>
            <person name="Inoue T."/>
            <person name="Shimizu H."/>
            <person name="Tominaga T."/>
        </authorList>
    </citation>
    <scope>VARIANT MYMY2 LYS-4810</scope>
</reference>
<reference key="32">
    <citation type="journal article" date="2012" name="Neurology">
        <title>Homozygous c.14576G&gt;A variant of RNF213 predicts early-onset and severe form of moyamoya disease.</title>
        <authorList>
            <person name="Miyatake S."/>
            <person name="Miyake N."/>
            <person name="Touho H."/>
            <person name="Nishimura-Tadaki A."/>
            <person name="Kondo Y."/>
            <person name="Okada I."/>
            <person name="Tsurusaki Y."/>
            <person name="Doi H."/>
            <person name="Sakai H."/>
            <person name="Saitsu H."/>
            <person name="Shimojima K."/>
            <person name="Yamamoto T."/>
            <person name="Higurashi M."/>
            <person name="Kawahara N."/>
            <person name="Kawauchi H."/>
            <person name="Nagasaka K."/>
            <person name="Okamoto N."/>
            <person name="Mori T."/>
            <person name="Koyano S."/>
            <person name="Kuroiwa Y."/>
            <person name="Taguri M."/>
            <person name="Morita S."/>
            <person name="Matsubara Y."/>
            <person name="Kure S."/>
            <person name="Matsumoto N."/>
        </authorList>
    </citation>
    <scope>VARIANT MYMY2 LYS-4810</scope>
</reference>
<reference key="33">
    <citation type="journal article" date="2012" name="PLoS ONE">
        <title>Molecular analysis of RNF213 gene for moyamoya disease in the Chinese Han population.</title>
        <authorList>
            <person name="Wu Z."/>
            <person name="Jiang H."/>
            <person name="Zhang L."/>
            <person name="Xu X."/>
            <person name="Zhang X."/>
            <person name="Kang Z."/>
            <person name="Song D."/>
            <person name="Zhang J."/>
            <person name="Guan M."/>
            <person name="Gu Y."/>
        </authorList>
    </citation>
    <scope>VARIANTS MYMY2 THR-4399 AND LYS-4810</scope>
    <scope>VARIANTS ARG-4007; LEU-4367; PRO-4586; VAL-4631; ASP-4950; VAL-5021 AND ILE-5136</scope>
</reference>
<reference key="34">
    <citation type="journal article" date="2013" name="Biochem. Biophys. Res. Commun.">
        <title>The moyamoya disease susceptibility variant RNF213 R4810K (rs112735431) induces genomic instability by mitotic abnormality.</title>
        <authorList>
            <person name="Hitomi T."/>
            <person name="Habu T."/>
            <person name="Kobayashi H."/>
            <person name="Okuda H."/>
            <person name="Harada K.H."/>
            <person name="Osafune K."/>
            <person name="Taura D."/>
            <person name="Sone M."/>
            <person name="Asaka I."/>
            <person name="Ameku T."/>
            <person name="Watanabe A."/>
            <person name="Kasahara T."/>
            <person name="Sudo T."/>
            <person name="Shiota F."/>
            <person name="Hashikata H."/>
            <person name="Takagi Y."/>
            <person name="Morito D."/>
            <person name="Miyamoto S."/>
            <person name="Nakao K."/>
            <person name="Koizumi A."/>
        </authorList>
    </citation>
    <scope>CHARACTERIZATION OF VARIANT MYMY2 LYS-4810</scope>
</reference>
<reference key="35">
    <citation type="journal article" date="2014" name="Int. J. Stroke">
        <title>Identification of a novel RNF213 variant in a family with heterogeneous intracerebral vasculopathy.</title>
        <authorList>
            <person name="Smith K.R."/>
            <person name="Leventer R.J."/>
            <person name="Mackay M.T."/>
            <person name="Pope K."/>
            <person name="Gillies G."/>
            <person name="Delatycki M.B."/>
            <person name="Amor D.J."/>
            <person name="Bahlo M."/>
            <person name="Lockhart P.J."/>
        </authorList>
    </citation>
    <scope>VARIANT THR-4185</scope>
</reference>
<reference key="36">
    <citation type="journal article" date="2014" name="Stroke">
        <title>RNF213 rare variants in an ethnically diverse population with Moyamoya disease.</title>
        <authorList>
            <consortium name="University of Washington Center for Mendelian Genomics"/>
            <person name="Cecchi A.C."/>
            <person name="Guo D."/>
            <person name="Ren Z."/>
            <person name="Flynn K."/>
            <person name="Santos-Cortez R.L."/>
            <person name="Leal S.M."/>
            <person name="Wang G.T."/>
            <person name="Regalado E.S."/>
            <person name="Steinberg G.K."/>
            <person name="Shendure J."/>
            <person name="Bamshad M.J."/>
            <person name="Grotta J.C."/>
            <person name="Nickerson D.A."/>
            <person name="Pannu H."/>
            <person name="Milewicz D.M."/>
        </authorList>
    </citation>
    <scope>VARIANTS MYMY2 ASN-4013 AND LYS-4810</scope>
    <scope>VARIANTS ALA-529 DEL; GLN-3922; TYR-3997; CYS-4019; VAL-4076; LYS-4115 DEL; GLU-4237; THR-4732 AND ILE-5163</scope>
</reference>
<reference key="37">
    <citation type="journal article" date="2015" name="Am. J. Med. Genet. A">
        <title>Atypical presentation of moyamoya disease in an infant with a de novo RNF213 variant.</title>
        <authorList>
            <person name="Harel T."/>
            <person name="Posey J.E."/>
            <person name="Graham B.H."/>
            <person name="Walkiewicz M."/>
            <person name="Yang Y."/>
            <person name="Lalani S.R."/>
            <person name="Belmont J.W."/>
        </authorList>
    </citation>
    <scope>VARIANT PHE-4118</scope>
    <scope>INVOLVEMENT IN MYMY2</scope>
</reference>
<reference key="38">
    <citation type="journal article" date="2015" name="J. Am. Heart Assoc.">
        <title>Biochemical and functional characterization of RNF213 (Mysterin) R4810K, a susceptibility mutation of Moyamoya disease, in angiogenesis in vitro and in vivo.</title>
        <authorList>
            <person name="Kobayashi H."/>
            <person name="Matsuda Y."/>
            <person name="Hitomi T."/>
            <person name="Okuda H."/>
            <person name="Shioi H."/>
            <person name="Matsuda T."/>
            <person name="Imai H."/>
            <person name="Sone M."/>
            <person name="Taura D."/>
            <person name="Harada K.H."/>
            <person name="Habu T."/>
            <person name="Takagi Y."/>
            <person name="Miyamoto S."/>
            <person name="Koizumi A."/>
        </authorList>
    </citation>
    <scope>CHARACTERIZATION OF VARIANT MYMY2 LYS-4810</scope>
    <scope>FUNCTION</scope>
    <scope>CATALYTIC ACTIVITY</scope>
    <scope>MUTAGENESIS OF GLU-2488</scope>
</reference>
<reference key="39">
    <citation type="journal article" date="2015" name="J. Neurol. Sci.">
        <title>Mutation genotypes of RNF213 gene from moyamoya patients in Taiwan.</title>
        <authorList>
            <person name="Lee M.J."/>
            <person name="Chen Y.F."/>
            <person name="Fan P.C."/>
            <person name="Wang K.C."/>
            <person name="Wang K."/>
            <person name="Wang J."/>
            <person name="Kuo M.F."/>
        </authorList>
    </citation>
    <scope>VARIANTS VAL-1622; MET-3933 AND CYS-4131</scope>
    <scope>VARIANT MYMY2 LYS-4810</scope>
</reference>
<reference key="40">
    <citation type="journal article" date="2016" name="PLoS ONE">
        <title>RNF213 rare variants in Slovakian and Czech moyamoya disease patients.</title>
        <authorList>
            <person name="Kobayashi H."/>
            <person name="Brozman M."/>
            <person name="Kyselova K."/>
            <person name="Viszlayova D."/>
            <person name="Morimoto T."/>
            <person name="Roubec M."/>
            <person name="Skoloudik D."/>
            <person name="Petrovicova A."/>
            <person name="Juskanic D."/>
            <person name="Strauss J."/>
            <person name="Halaj M."/>
            <person name="Kurray P."/>
            <person name="Hranai M."/>
            <person name="Harada K.H."/>
            <person name="Inoue S."/>
            <person name="Yoshida Y."/>
            <person name="Habu T."/>
            <person name="Herzig R."/>
            <person name="Youssefian S."/>
            <person name="Koizumi A."/>
        </authorList>
    </citation>
    <scope>VARIANTS CYS-4019; LYS-4042; ALA-4146 AND LEU-4677</scope>
    <scope>CHARACTERIZATION OF VARIANT MYMY2 ASN-4013</scope>
    <scope>CHARACTERIZATION OF VARIANTS CYS-4019 AND ALA-4146</scope>
</reference>
<reference key="41">
    <citation type="journal article" date="2017" name="Eur. J. Hum. Genet.">
        <title>Rare RNF213 variants in the C-terminal region encompassing the RING-finger domain are associated with moyamoya angiopathy in Caucasians.</title>
        <authorList>
            <consortium name="FREX consortium"/>
            <person name="Guey S."/>
            <person name="Kraemer M."/>
            <person name="Herve D."/>
            <person name="Ludwig T."/>
            <person name="Kossorotoff M."/>
            <person name="Bergametti F."/>
            <person name="Schwitalla J.C."/>
            <person name="Choi S."/>
            <person name="Broseus L."/>
            <person name="Callebaut I."/>
            <person name="Genin E."/>
            <person name="Tournier-Lasserve E."/>
        </authorList>
    </citation>
    <scope>VARIANTS ARG-118; MET-133; ASN-209; LEU-395; VAL-1135; LYS-1705; LEU-1721; THR-1844; HIS-3846; THR-3927; MET-3933; ASN-4014; CYS-4019; ARG-4032; LEU-4033; LYS-4042; PRO-4051; GLN-4062; VAL-4122; SER-4608 AND SER-4640</scope>
    <scope>VARIANTS MYMY2 ASN-4013 AND THR-4399</scope>
</reference>
<reference key="42">
    <citation type="journal article" date="2018" name="Hum. Genome Var.">
        <title>Novel and recurrent RNF213 variants in Japanese pediatric patients with moyamoya disease.</title>
        <authorList>
            <person name="Akagawa H."/>
            <person name="Mukawa M."/>
            <person name="Nariai T."/>
            <person name="Nomura S."/>
            <person name="Aihara Y."/>
            <person name="Onda H."/>
            <person name="Yoneyama T."/>
            <person name="Kudo T."/>
            <person name="Sumita K."/>
            <person name="Maehara T."/>
            <person name="Kawamata T."/>
            <person name="Kasuya H."/>
        </authorList>
    </citation>
    <scope>VARIANTS LYS-996; PRO-4058 AND GLN-4062</scope>
    <scope>INVOLVEMENT IN MYMY2</scope>
</reference>
<reference key="43">
    <citation type="journal article" date="2019" name="Hum. Genome Var.">
        <title>Novel missense variants in the RNF213 gene from a European family with Moyamoya disease.</title>
        <authorList>
            <person name="Gagunashvili A.N."/>
            <person name="Ocaka L."/>
            <person name="Kelberman D."/>
            <person name="Munot P."/>
            <person name="Bacchelli C."/>
            <person name="Beales P.L."/>
            <person name="Ganesan V."/>
        </authorList>
    </citation>
    <scope>VARIANTS GLU-4185 AND THR-4188</scope>
    <scope>INVOLVEMENT IN MYMY2</scope>
</reference>
<reference key="44">
    <citation type="journal article" date="2020" name="J. Neurosurg. Sci.">
        <title>Moyamoya vasculopathy shows a genetic mutational gradient decreasing from East to West.</title>
        <authorList>
            <person name="Raso A."/>
            <person name="Biassoni R."/>
            <person name="Mascelli S."/>
            <person name="Nozza P."/>
            <person name="Ugolotti E."/>
            <person name="Di Marco E."/>
            <person name="De Marco P."/>
            <person name="Merello E."/>
            <person name="Cama A."/>
            <person name="Pavanello M."/>
            <person name="Capra V."/>
        </authorList>
    </citation>
    <scope>VARIANTS SER-4017 AND LEU-4677</scope>
    <scope>INVOLVEMENT IN MYMY2</scope>
</reference>
<reference key="45">
    <citation type="journal article" date="2021" name="Neurology">
        <title>Association of de novo RNF213 variants with childhood onset Moyamoya disease and diffuse occlusive vasculopathy.</title>
        <authorList>
            <person name="Pinard A."/>
            <person name="Fiander M.D.J."/>
            <person name="Cecchi A.C."/>
            <person name="Rideout A.L."/>
            <person name="Azouz M."/>
            <person name="Fraser S.M."/>
            <person name="McNeely P.D."/>
            <person name="Walling S."/>
            <person name="Novara S.C."/>
            <person name="Hurst A.C.E."/>
            <person name="Guo D."/>
            <person name="Parkash S."/>
            <person name="Bamshad M.J."/>
            <person name="Nickerson D.A."/>
            <person name="Vandersteen A.M."/>
            <person name="Milewicz D.M."/>
        </authorList>
    </citation>
    <scope>VARIANTS 3996-PRO-CYS-3997 DELINS GLY-LEU-GLY; ARG-4114 AND LEU-4120</scope>
    <scope>INVOLVEMENT IN MYMY2</scope>
</reference>
<comment type="function">
    <text evidence="9 20 22 23 28 29 31 33 34">Atypical E3 ubiquitin ligase that can catalyze ubiquitination of both proteins and lipids, and which is involved in various processes, such as lipid metabolism, angiogenesis and cell-autonomous immunity (PubMed:21799892, PubMed:26126547, PubMed:26278786, PubMed:26766444, PubMed:30705059, PubMed:32139119, PubMed:34012115). Acts as a key immune sensor by catalyzing ubiquitination of the lipid A moiety of bacterial lipopolysaccharide (LPS) via its RZ-type zinc-finger: restricts the proliferation of cytosolic bacteria, such as Salmonella, by generating the bacterial ubiquitin coat through the ubiquitination of LPS (PubMed:34012115). Also acts indirectly by mediating the recruitment of the LUBAC complex, which conjugates linear polyubiquitin chains (PubMed:34012115). Ubiquitination of LPS triggers cell-autonomous immunity, such as antibacterial autophagy, leading to degradation of the microbial invader (PubMed:34012115). Involved in lipid metabolism by regulating fat storage and lipid droplet formation; act by inhibiting the lipolytic process (PubMed:30705059). Also regulates lipotoxicity by inhibiting desaturation of fatty acids (PubMed:30846318). Also acts as an E3 ubiquitin-protein ligase via its RING-type zinc finger: mediates 'Lys-63'-linked ubiquitination of target proteins (PubMed:32139119, PubMed:33842849). Involved in the non-canonical Wnt signaling pathway in vascular development: acts by mediating ubiquitination and degradation of FLNA and NFATC2 downstream of RSPO3, leading to inhibit the non-canonical Wnt signaling pathway and promoting vessel regression (PubMed:26766444). Also has ATPase activity; ATPase activity is required for ubiquitination of LPS (PubMed:34012115).</text>
</comment>
<comment type="catalytic activity">
    <reaction evidence="9 31 33">
        <text>S-ubiquitinyl-[E2 ubiquitin-conjugating enzyme]-L-cysteine + [acceptor protein]-L-lysine = [E2 ubiquitin-conjugating enzyme]-L-cysteine + N(6)-ubiquitinyl-[acceptor protein]-L-lysine.</text>
        <dbReference type="EC" id="2.3.2.27"/>
    </reaction>
</comment>
<comment type="catalytic activity">
    <reaction evidence="9 42 43">
        <text>ATP + H2O = ADP + phosphate + H(+)</text>
        <dbReference type="Rhea" id="RHEA:13065"/>
        <dbReference type="ChEBI" id="CHEBI:15377"/>
        <dbReference type="ChEBI" id="CHEBI:15378"/>
        <dbReference type="ChEBI" id="CHEBI:30616"/>
        <dbReference type="ChEBI" id="CHEBI:43474"/>
        <dbReference type="ChEBI" id="CHEBI:456216"/>
    </reaction>
    <physiologicalReaction direction="left-to-right" evidence="9 42 43">
        <dbReference type="Rhea" id="RHEA:13066"/>
    </physiologicalReaction>
</comment>
<comment type="pathway">
    <text evidence="31 33 41">Protein modification; protein ubiquitination.</text>
</comment>
<comment type="subunit">
    <text evidence="1 31 33">Monomer (By similarity). Interacts with UBE2L3/UBCH7; UBE2L3/UBCH7 is the most efficient ubiquitin-conjugating enzyme E2 for the ubiquitin ligase activity (By similarity). Interacts with UBE2N/UBC13; promoting 'Lys-63'-linked ubiquitination of target proteins (PubMed:32139119, PubMed:33842849).</text>
</comment>
<comment type="subunit">
    <text evidence="7">(Microbial infection) Interacts with M.tuberculosis protein Rv3655c, which impairs caspase-8 activation and suppresses macrophage apoptosis by blocking the extrinsic pathway.</text>
</comment>
<comment type="interaction">
    <interactant intactId="EBI-10248548">
        <id>Q63HN8-6</id>
    </interactant>
    <interactant intactId="EBI-618309">
        <id>Q08379</id>
        <label>GOLGA2</label>
    </interactant>
    <organismsDiffer>false</organismsDiffer>
    <experiments>3</experiments>
</comment>
<comment type="interaction">
    <interactant intactId="EBI-10248548">
        <id>Q63HN8-6</id>
    </interactant>
    <interactant intactId="EBI-10171697">
        <id>Q6A162</id>
        <label>KRT40</label>
    </interactant>
    <organismsDiffer>false</organismsDiffer>
    <experiments>3</experiments>
</comment>
<comment type="interaction">
    <interactant intactId="EBI-10248548">
        <id>Q63HN8-6</id>
    </interactant>
    <interactant intactId="EBI-307352">
        <id>Q04864</id>
        <label>REL</label>
    </interactant>
    <organismsDiffer>false</organismsDiffer>
    <experiments>3</experiments>
</comment>
<comment type="interaction">
    <interactant intactId="EBI-10248548">
        <id>Q63HN8-6</id>
    </interactant>
    <interactant intactId="EBI-740098">
        <id>P36406</id>
        <label>TRIM23</label>
    </interactant>
    <organismsDiffer>false</organismsDiffer>
    <experiments>3</experiments>
</comment>
<comment type="interaction">
    <interactant intactId="EBI-10248548">
        <id>Q63HN8-6</id>
    </interactant>
    <interactant intactId="EBI-719493">
        <id>P14373</id>
        <label>TRIM27</label>
    </interactant>
    <organismsDiffer>false</organismsDiffer>
    <experiments>3</experiments>
</comment>
<comment type="interaction">
    <interactant intactId="EBI-10248548">
        <id>Q63HN8-6</id>
    </interactant>
    <interactant intactId="EBI-742327">
        <id>Q15654</id>
        <label>TRIP6</label>
    </interactant>
    <organismsDiffer>false</organismsDiffer>
    <experiments>3</experiments>
</comment>
<comment type="interaction">
    <interactant intactId="EBI-10248548">
        <id>Q63HN8-6</id>
    </interactant>
    <interactant intactId="EBI-746004">
        <id>Q5T124</id>
        <label>UBXN11</label>
    </interactant>
    <organismsDiffer>false</organismsDiffer>
    <experiments>3</experiments>
</comment>
<comment type="subcellular location">
    <subcellularLocation>
        <location evidence="9 28 34">Cytoplasm</location>
        <location evidence="9 28 34">Cytosol</location>
    </subcellularLocation>
    <subcellularLocation>
        <location evidence="28">Lipid droplet</location>
    </subcellularLocation>
</comment>
<comment type="alternative products">
    <event type="alternative splicing"/>
    <isoform>
        <id>Q63HN8-3</id>
        <name>1</name>
        <sequence type="displayed"/>
    </isoform>
    <isoform>
        <id>Q63HN8-4</id>
        <name>2</name>
        <sequence type="described" ref="VSP_042417"/>
    </isoform>
    <isoform>
        <id>Q63HN8-5</id>
        <name>3</name>
        <sequence type="described" ref="VSP_042418 VSP_042419"/>
    </isoform>
    <isoform>
        <id>Q63HN8-6</id>
        <name>4</name>
        <sequence type="described" ref="VSP_042416 VSP_042420"/>
    </isoform>
</comment>
<comment type="tissue specificity">
    <text evidence="9">Widely expressed (at protein level).</text>
</comment>
<comment type="tissue specificity">
    <molecule>Isoform 1</molecule>
    <text evidence="9">Major isoform detected in all tissues examined.</text>
</comment>
<comment type="tissue specificity">
    <molecule>Isoform 2</molecule>
    <text evidence="9">Minor isoform with restricted expression.</text>
</comment>
<comment type="induction">
    <text evidence="19 22">Down-regulated by let-7c miRNA, which binds to the 3'-UTR transcript of RNF213 (PubMed:26070522). Induced by pro-inflammatory cytokines (PubMed:26278786).</text>
</comment>
<comment type="induction">
    <text evidence="7">(Microbial infection) Up-regulated in macrophages infected by M.tuberculosis.</text>
</comment>
<comment type="domain">
    <text evidence="1">Composed of an N-terminal stalk, a dynein-like core comprised of two catalytically active and four inactive ATPase domains, and a C-terminal E3 module. The ATPase regions do not generate movement but rather act like an intricate molecular 'switch'.</text>
</comment>
<comment type="domain">
    <text evidence="9">The RING-type zinc finger domain is required for the ubiquitin-protein ligase activity.</text>
</comment>
<comment type="domain">
    <text evidence="34">The RZ-type (RNF213-ZNFX1) zinc-finger is required for the ubiquitination of the lipid A moiety of bacterial lipopolysaccharide (LPS).</text>
</comment>
<comment type="PTM">
    <text evidence="9">Autoubiquitinated.</text>
</comment>
<comment type="disease" evidence="8 9 10 11 12 13 14 17 18 20 21 24 25 26 27 30 31 32 34">
    <disease id="DI-03059">
        <name>Moyamoya disease 2</name>
        <acronym>MYMY2</acronym>
        <description>A progressive cerebral angiopathy characterized by bilateral intracranial carotid artery stenosis and telangiectatic vessels in the region of the basal ganglia. The abnormal vessels resemble a 'puff of smoke' (moyamoya) on cerebral angiogram. Affected individuals can develop transient ischemic attacks and/or cerebral infarction, and rupture of the collateral vessels can cause intracranial hemorrhage. Hemiplegia of sudden onset and epileptic seizures constitute the prevailing presentation in childhood, while subarachnoid bleeding occurs more frequently in adults.</description>
        <dbReference type="MIM" id="607151"/>
    </disease>
    <text>Disease susceptibility is associated with variants affecting the gene represented in this entry.</text>
</comment>
<comment type="disease">
    <text evidence="6">A chromosomal aberration involving RNF213 is associated with anaplastic large-cell lymphoma (ALCL). Translocation t(2;17)(p23;q25) with ALK.</text>
</comment>
<comment type="similarity">
    <text evidence="40">Belongs to the AAA ATPase family.</text>
</comment>
<comment type="caution">
    <text evidence="1 15 20">The stoichiometry is unclear: was initially thought to form homohexamers (PubMed:24658080, PubMed:26126547). However, the electron microscopy structure showed that it is monomeric and is composed of six ATPase modules within a single polypeptide chain (By similarity).</text>
</comment>
<comment type="sequence caution" evidence="40">
    <conflict type="erroneous initiation">
        <sequence resource="EMBL-CDS" id="AAH32220"/>
    </conflict>
    <text>Truncated N-terminus.</text>
</comment>
<comment type="sequence caution" evidence="40">
    <conflict type="miscellaneous discrepancy">
        <sequence resource="EMBL-CDS" id="BAB13444"/>
    </conflict>
    <text>Probable cloning artifact.</text>
</comment>
<comment type="sequence caution" evidence="40">
    <conflict type="erroneous initiation">
        <sequence resource="EMBL-CDS" id="BAB14708"/>
    </conflict>
    <text>Truncated N-terminus.</text>
</comment>
<comment type="sequence caution" evidence="40">
    <conflict type="erroneous initiation">
        <sequence resource="EMBL-CDS" id="BAB15212"/>
    </conflict>
    <text>Truncated N-terminus.</text>
</comment>
<comment type="sequence caution" evidence="40">
    <conflict type="erroneous termination">
        <sequence resource="EMBL-CDS" id="BAB15280"/>
    </conflict>
    <text>Truncated C-terminus.</text>
</comment>
<comment type="sequence caution" evidence="40">
    <conflict type="erroneous initiation">
        <sequence resource="EMBL-CDS" id="BAB15330"/>
    </conflict>
    <text>Truncated N-terminus.</text>
</comment>
<comment type="sequence caution" evidence="40">
    <conflict type="frameshift">
        <sequence resource="EMBL-CDS" id="CAH10615"/>
    </conflict>
</comment>
<comment type="sequence caution" evidence="40">
    <conflict type="erroneous initiation">
        <sequence resource="EMBL-CDS" id="CAH56189"/>
    </conflict>
    <text>Truncated N-terminus.</text>
</comment>
<comment type="online information" name="Atlas of Genetics and Cytogenetics in Oncology and Haematology">
    <link uri="https://atlasgeneticsoncology.org/gene/480/ALO17"/>
</comment>
<name>RN213_HUMAN</name>
<sequence>MECPSCQHVSKEETPKFCSQCGERLPPAAPIADSENNNSTMASASEGEMECGQELKEEGGPCLFPGSDSWQENPEEPCSKASWTVQESKKKKRKKKKKGNKSASSELASLPLSPASPCHLTLLSNPWPQDTALPHSQAQQSGPTGQPSQPPGTATTPLEGDGLSAPTEVGDSPLQAQALGEAGVATGSEAQSSPQFQDHTEGEDQDASIPSGGRGLSQEGTGPPTSAGEGHSRTEDAAQELLLPESKGGSSEPGTELQTTEQQAGASASMAVDAVAEPANAVKGAGKEMKEKTQRMKQPPATTPPFKTHCQEAETKTKDEMAAAEEKVGKNEQGEPEDLKKPEGKNRSAAAVKNEKEQKNQEADVQEVKASTLSPGGGVTVFFHAIISLHFPFNPDLHKVFIRGGEEFGESKWDSNICELHYTRDLGHDRVLVEGIVCISKKHLDKYIPYKYVIYNGESFEYEFIYKHQQKKGEYVNRCLFIKSSLLGSGDWHQYYDIVYMKPHGRLQKVMNHITDGPRKDLVKGKQIAAALMLDSTFSILQTWDTINLNSFFTQFEQFCFVLQQPMIYEGQAQLWTDLQYREKEVKRYLWQHLKKHVVPLPDGKSTDFLPVDCPVRSKLKTGLIVLFVVEKIELLLEGSLDWLCHLLTSDASSPDEFHRDLSHILGIPQSWRLYLVNLCQRCMDTRTYTWLGALPVLHCCMELAPRHKDAWRQPEDTWAALEGLSFSPFREQMLDTSSLLQFMREKQHLLSIDEPLFRSWFSLLPLSHLVMYMENFIEHLGRFPAHILDCLSGIYYRLPGLEQVLNTQDVQDVQNVQNILEMLLRLLDTYRDKIPEEALSPSYLTVCLKLHEAICSSTKLLKFYELPALSAEIVCRMIRLLSLVDSAGQRDETGNNSVQTVFQGTLAATKRWLREVFTKNMLTSSGASFTYVKEIEVWRRLVEIQFPAEHGWKESLLGDMEWRLTKEEPLSQITAYCNSCWDTKGLEDSVAKTFEKCIIEAVSSACQSQTSILQGFSYSDLRKFGIVLSAVITKSWPRTADNFNDILKHLLTLADVKHVFRLCGTDEKILANVTEDAKRLIAVADSVLTKVVGDLLSGTILVGQLELIIKHKNQFLDIWQLREKSLSPQDEQCAVEEALDWRREELLLLKKEKRCVDSLLKMCGNVKHLIQVDFGVLAVRHSQDLSSKRLNDTVTVRLSTSSNSQRATHYHLSSQVQEMAGKIDLLRDSHIFQLFWREAAEPLSEPKEDQEAAELLSEPEEESERHILELEEVYDYLYQPSYRKFIKLHQDLKSGEVTLAEIDVIFKDFVNKYTDLDSELKIMCTVDHQDQRDWIKDRVEQIKEYHHLHQAVHAAKVILQVKESLGLNGDFSVLNTLLNFTDNFDDFRRETLDQINQELIQAKKLLQDISEARCKGLQALSLRKEFICWVREALGGINELKVFVDLASISAGENDIDVDRVACFHDAVQGYASLLFKLDPSVDFSAFMKHLKKLWKALDKDQYLPRKLCDSARNLEWLKTVNESHGSVERSSLTLATAINQRGIYVIQAPKGGQKISPDTVLHLILPESPGSHEESREYSLEEVKELLNKLMLMSGKKDRNNTEVERFSEVFCSVQRLSQAFIDLHSAGNMLFRTWIAMAYCSPKQGVSLQMDFGLDLVTELKEGGDVTELLAALCRQMEHFLDSWKRFVTQKRMEHFYLNFYTAEQLVYLSTELRKQPPSDAALTMLSFIKSNCTLRDVLRASVGCGSEAARYRMRRVMEELPLMLLSEFSLVDKLRIIMEQSMRCLPAFLPDCLDLETLGHCLAHLAGMGGSPVERCLPRGLQVGQPNLVVCGHSEVLPAALAVYMQTPSQPLPTYDEVLLCTPATTFEEVALLLRRCLTLGSLGHKVYSLLFADQLSYEVARQAEELFHNLCTQQHREDYQLVMVCDGDWEHCYLPSAFSQHKVFVTPQAPLEAIQAYLAGHYRVPKQTLSAAAVFNDRLCVGIVASERAGVGKSLYVKRLHDKMKMQLNVKNVPLKTIRLIDPQVDESRVLGALLPFLDAQYQKVPVLFHLDVTSSVQTGIWVFLFKLLILQYLMDINGKMWLRNPCHLYIVEILERRTSVPSRSSSALRTRVPQFSFLDIFPKVTCRPPKEVIDMELSALRSDTEPGMDLWEFCSETFQRPYQYLRRFNQNQDLDTFQYQEGSVEGTPEECLQHFLFHCGVINPSWSELRNFARFLNYQLRDCEASLFCNPSFIGDTLRGFKKFVVTFMIFMARDFATPSLHTSDQSPGKHMVTMDGVREEDLAPFSLRKRWESEPHPYVFFNDDHTTMTFIGFHLQPNINGSVDAISHLTGKVIKRDVMTRDLYQGLLLQRVPFNVDFDKLPRHKKLERLCLTLGIPQATDPDKTYELTTDNMLKILAIEMRFRCGIPVIIMGETGCGKTRLIKFLSDLRRGGTNADTIKLVKVHGGTTADMIYSRVREAENVAFANKDQHQLDTILFFDEANTTEAISCIKEVLCDHMVDGQPLAEDSGLHIIAACNPYRKHSEEMICRLESAGLGYRVSMEETADRLGSIPLRQLVYRVHALPPSLIPLVWDFGQLSDVAEKLYIQQIVQRLVESISLDENGTRVITEVLCASQGFMRKTEDECSFVSLRDVERCVKVFRWFHEHSAMLLAQLNAFLSKSSVSKNHTERDPVLWSLMLAIGVCYHASLEKKDSYRKAIARFFPKPYDDSRLLLDEITRAQDLFLDGVPLRKTIAKNLALKENVFMMVVCIELKIPLFLVGKPGSSKSLAKTIVADAMQGPAAYSDLFRSLKQVHLVSFQCSPHSTPQGIISTFRQCARFQQGKDLQQYVSVVVLDEVGLAEDSPKMPLKTLHPLLEDGCIEDDPAPHKKVGFVGISNWALDPAKMNRGIFVSRGSPNETELIESAKGICSSDILVQDRVQGYFASFAKAYETVCKRQDKEFFGLRDYYSLIKMVFAAAKASNRKPSPQDIAQAVLRNFSGKDDIQALDIFLANLPEAKCSEEVSPMQLIKQNIFGPSQKVPGGEQEDAESRYLLVLTKNYVALQILQQTFFEGDQQPEIIFGSGFPKDQEYTQLCRNINRVKICMETGKMVLLLNLQNLYESLYDALNQYYVHLGGQKYVDLGLGTHRVKCRVHPNFRLIVIEEKDVVYKHFPIPLINRLEKHYLDINTVLEKWQKSIVEELCAWVEKFINVKAHHFQKRHKYSPSDVFIGYHSDACASVVLQVIERQGPRALTEELHQKVSEEAKSILLNCATPDAVVRLSAYSLGGFAAEWLSQEYFHRQRHNSFADFLQAHLHTADLERHAIFTEITTFSRLLTSHDCEILESEVTGRAPKPTLLWLQQFDTEYSFLKEVRNCLTNTAKCKILIFQTDFEDGIRSAQLIASAKYSVINEINKIRENEDRIFVYFITKLSRVGRGTAYVGFHGGLWQSVHIDDLRRSTLMVSDVTRLQHVTISQLFAPGDLPELGLEHRAEDGHEEAMETEASTSGEVAEVAEEAMETESSEKVGKETSELGGSDVSILDTTRLLRSCVQSAVGMLRDQNESCTRNMRRVVLLLGLLNEDDACHASFLRVSKMRLSVFLKKQEESQFHPLEWLAREACNQDALQEAGTFRHTLWKRVQGAVTPLLASMISFIDRDGNLELLTRPDTPPWARDLWMFIFSDTMLLNIPLVMNNERHKGEMAYIVVQNHMNLSENASNNVPFSWKIKDYLEELWVQAQYITDAEGLPKKFVDIFQQTPLGRFLAQLHGEPQQELLQCYLKDFILLTMRVSTEEELKFLQMALWSCTRKLKAASEAPEEEVSLPWVHLAYQRFRSRLQNFSRILTIYPQVLHSLMEARWNHELAGCEMTLDAFAAMACTEMLTRNTLKPSPQAWLQLVKNLSMPLELICSDEHMQGSGSLAQAVIREVRAQWSRIFSTALFVEHVLLGTESRVPELQGLVTEHVFLLDKCLRENSDVKTHGPFEAVMRTLCECKETASKTLSRFGIQPCSICLGDAKDPVCLPCDHVHCLRCLRAWFASEQMICPYCLTALPDEFSPAVSQAHREAIEKHARFRQMCNSFFVDLVSTICFKDNAPPEKEVIESLLSLLFVQKGRLRDAAQRHCEHTKSLSPFNDVVDKTPVIRSVILKLLLKYSFHDVKDYIQEYLTLLKKKAFITEDKTELYMLFINCLEDSILEKTSAYSRNDELNHLEEEGRFLKAYSPASRGREPANEASVEYLQEVARIRLCLDRAADFLSEPEGGPEMAKEKQCYLQQVKQFCIRVENDWHRVYLVRKLSSQRGMEFVQGLSKPGRPHQWVFPKDVVKQQGLRQDHPGQMDRYLVYGDEYKALRDAVAKAVLECKPLGIKTALKACKTPQSQQSAYFLLTLFREVAILYRSHNASLHPTPEQCEAVSKFIGECKILSPPDISRFATSLVDNSVPLLRAGPSDSNLDGTVTEMAIHAAAVLLCGQNELLEPLKNLAFSPATMAHAFLPTMPEDLLAQARRWKGLERVHWYTCPNGHPCSVGECGRPMEQSICIDCHAPIGGIDHKPRDGFHLVKDKADRTQTGHVLGNPQRRDVVTCDRGLPPVVFLLIRLLTHLALLLGASQSSQALINIIKPPVRDPKGFLQQHILKDLEQLAKMLGHSADETIGVVHLVLRRLLQEQHQLSSRRLLNFDTELSTKEMRNNWEKEIAAVISPELEHLDKTLPTMNNLISQDKRISSNPVAKIIYGDPVTFLPHLPRKSVVHCSKIWSCRKRITVEYLQHIVEQKNGKERVPILWHFLQKEAELRLVKFLPEILALQRDLVKQFQNVQQVEYSSIRGFLSKHSSDGLRQLLHNRITVFLSTWNKLRRSLETNGEINLPKDYCSTDLDLDTEFEILLPRRRGLGLCATALVSYLIRLHNEIVYAVEKLSKENNSYSVDAAEVTELHVISYEVERDLTPLILSNCQYQVEEGRETVQEFDLEKIQRQIVSRFLQGKPRLSLKGIPTLVYRHDWNYEHLFMDIKNKMAQDSLPSSVISAISGQLQSYSDACEVLSVVEVTLGFLSTAGGDPNMQLNVYTQDILQMGDQTIHVLKALNRCQLKHTIALWQFLSAHKSEQLLRLHKEPFGEISSRYKADLSPENAKLLSTFLNQTGLDAFLLELHEMIILKLKNPQTQTEERFRPQWSLRDTLVSYMQTKESEILPEMASQFPEEILLASCVSVWKTAAVLKWNREMR</sequence>
<protein>
    <recommendedName>
        <fullName evidence="40">E3 ubiquitin-protein ligase RNF213</fullName>
        <ecNumber evidence="9 31 33">2.3.2.27</ecNumber>
        <ecNumber evidence="9 42 43">3.6.4.-</ecNumber>
    </recommendedName>
    <alternativeName>
        <fullName evidence="36">ALK lymphoma oligomerization partner on chromosome 17</fullName>
    </alternativeName>
    <alternativeName>
        <fullName evidence="40">E3 ubiquitin-lipopolysaccharide ligase RNF213</fullName>
        <ecNumber evidence="34">2.3.2.-</ecNumber>
    </alternativeName>
    <alternativeName>
        <fullName evidence="39">Mysterin</fullName>
    </alternativeName>
    <alternativeName>
        <fullName evidence="40">RING finger protein 213</fullName>
    </alternativeName>
</protein>
<accession>Q63HN8</accession>
<accession>C9JCP4</accession>
<accession>D6RI12</accession>
<accession>F8WKS1</accession>
<accession>Q658P6</accession>
<accession>Q69YK7</accession>
<accession>Q6MZR1</accession>
<accession>Q8IWF4</accession>
<accession>Q8IZX1</accession>
<accession>Q8IZX2</accession>
<accession>Q8N406</accession>
<accession>Q8TEU0</accession>
<accession>Q9H6C9</accession>
<accession>Q9H6H9</accession>
<accession>Q9H6P3</accession>
<accession>Q9H8A9</accession>
<accession>Q9HCF4</accession>
<accession>Q9HCL8</accession>
<dbReference type="EC" id="2.3.2.27" evidence="9 31 33"/>
<dbReference type="EC" id="3.6.4.-" evidence="9 42 43"/>
<dbReference type="EC" id="2.3.2.-" evidence="34"/>
<dbReference type="EMBL" id="AB537889">
    <property type="protein sequence ID" value="BAK53191.1"/>
    <property type="molecule type" value="mRNA"/>
</dbReference>
<dbReference type="EMBL" id="AL832920">
    <property type="protein sequence ID" value="CAH10615.1"/>
    <property type="status" value="ALT_FRAME"/>
    <property type="molecule type" value="mRNA"/>
</dbReference>
<dbReference type="EMBL" id="AL833201">
    <property type="protein sequence ID" value="CAH56308.1"/>
    <property type="molecule type" value="mRNA"/>
</dbReference>
<dbReference type="EMBL" id="BX640932">
    <property type="protein sequence ID" value="CAE45967.1"/>
    <property type="molecule type" value="mRNA"/>
</dbReference>
<dbReference type="EMBL" id="BX647946">
    <property type="protein sequence ID" value="CAH56189.1"/>
    <property type="status" value="ALT_INIT"/>
    <property type="molecule type" value="mRNA"/>
</dbReference>
<dbReference type="EMBL" id="AC123764">
    <property type="status" value="NOT_ANNOTATED_CDS"/>
    <property type="molecule type" value="Genomic_DNA"/>
</dbReference>
<dbReference type="EMBL" id="AC124319">
    <property type="status" value="NOT_ANNOTATED_CDS"/>
    <property type="molecule type" value="Genomic_DNA"/>
</dbReference>
<dbReference type="EMBL" id="BC032220">
    <property type="protein sequence ID" value="AAH32220.1"/>
    <property type="status" value="ALT_INIT"/>
    <property type="molecule type" value="mRNA"/>
</dbReference>
<dbReference type="EMBL" id="BC036891">
    <property type="protein sequence ID" value="AAH36891.1"/>
    <property type="molecule type" value="mRNA"/>
</dbReference>
<dbReference type="EMBL" id="BC040341">
    <property type="protein sequence ID" value="AAH40341.1"/>
    <property type="molecule type" value="mRNA"/>
</dbReference>
<dbReference type="EMBL" id="AF397204">
    <property type="protein sequence ID" value="AAN63520.1"/>
    <property type="molecule type" value="mRNA"/>
</dbReference>
<dbReference type="EMBL" id="AF397205">
    <property type="protein sequence ID" value="AAN63521.1"/>
    <property type="molecule type" value="mRNA"/>
</dbReference>
<dbReference type="EMBL" id="AB046774">
    <property type="protein sequence ID" value="BAB13380.1"/>
    <property type="molecule type" value="mRNA"/>
</dbReference>
<dbReference type="EMBL" id="AB046838">
    <property type="protein sequence ID" value="BAB13444.1"/>
    <property type="status" value="ALT_SEQ"/>
    <property type="molecule type" value="mRNA"/>
</dbReference>
<dbReference type="EMBL" id="AK023871">
    <property type="protein sequence ID" value="BAB14708.1"/>
    <property type="status" value="ALT_INIT"/>
    <property type="molecule type" value="mRNA"/>
</dbReference>
<dbReference type="EMBL" id="AK025676">
    <property type="protein sequence ID" value="BAB15212.1"/>
    <property type="status" value="ALT_INIT"/>
    <property type="molecule type" value="mRNA"/>
</dbReference>
<dbReference type="EMBL" id="AK025914">
    <property type="protein sequence ID" value="BAB15280.1"/>
    <property type="status" value="ALT_SEQ"/>
    <property type="molecule type" value="mRNA"/>
</dbReference>
<dbReference type="EMBL" id="AK026038">
    <property type="protein sequence ID" value="BAB15330.1"/>
    <property type="status" value="ALT_INIT"/>
    <property type="molecule type" value="mRNA"/>
</dbReference>
<dbReference type="EMBL" id="AK074030">
    <property type="protein sequence ID" value="BAB84856.1"/>
    <property type="molecule type" value="mRNA"/>
</dbReference>
<dbReference type="CCDS" id="CCDS11772.1">
    <molecule id="Q63HN8-5"/>
</dbReference>
<dbReference type="CCDS" id="CCDS32761.2">
    <molecule id="Q63HN8-4"/>
</dbReference>
<dbReference type="CCDS" id="CCDS58606.1">
    <molecule id="Q63HN8-3"/>
</dbReference>
<dbReference type="RefSeq" id="NP_001243000.2">
    <property type="nucleotide sequence ID" value="NM_001256071.2"/>
</dbReference>
<dbReference type="RefSeq" id="NP_066005.2">
    <molecule id="Q63HN8-5"/>
    <property type="nucleotide sequence ID" value="NM_020954.4"/>
</dbReference>
<dbReference type="PDB" id="8S24">
    <property type="method" value="EM"/>
    <property type="resolution" value="3.00 A"/>
    <property type="chains" value="A=1-5207"/>
</dbReference>
<dbReference type="PDBsum" id="8S24"/>
<dbReference type="EMDB" id="EMD-19653"/>
<dbReference type="SMR" id="Q63HN8"/>
<dbReference type="BioGRID" id="121705">
    <property type="interactions" value="188"/>
</dbReference>
<dbReference type="FunCoup" id="Q63HN8">
    <property type="interactions" value="1364"/>
</dbReference>
<dbReference type="IntAct" id="Q63HN8">
    <property type="interactions" value="98"/>
</dbReference>
<dbReference type="MINT" id="Q63HN8"/>
<dbReference type="STRING" id="9606.ENSP00000464087"/>
<dbReference type="GlyCosmos" id="Q63HN8">
    <property type="glycosylation" value="5 sites, 2 glycans"/>
</dbReference>
<dbReference type="GlyGen" id="Q63HN8">
    <property type="glycosylation" value="7 sites, 1 N-linked glycan (1 site), 2 O-linked glycans (6 sites)"/>
</dbReference>
<dbReference type="iPTMnet" id="Q63HN8"/>
<dbReference type="MetOSite" id="Q63HN8"/>
<dbReference type="PhosphoSitePlus" id="Q63HN8"/>
<dbReference type="SwissPalm" id="Q63HN8"/>
<dbReference type="BioMuta" id="RNF213"/>
<dbReference type="DMDM" id="380865458"/>
<dbReference type="jPOST" id="Q63HN8"/>
<dbReference type="MassIVE" id="Q63HN8"/>
<dbReference type="PaxDb" id="9606-ENSP00000464087"/>
<dbReference type="PeptideAtlas" id="Q63HN8"/>
<dbReference type="ProteomicsDB" id="65884">
    <molecule id="Q63HN8-3"/>
</dbReference>
<dbReference type="ProteomicsDB" id="65885">
    <molecule id="Q63HN8-4"/>
</dbReference>
<dbReference type="ProteomicsDB" id="65886">
    <molecule id="Q63HN8-5"/>
</dbReference>
<dbReference type="ProteomicsDB" id="65887">
    <molecule id="Q63HN8-6"/>
</dbReference>
<dbReference type="Pumba" id="Q63HN8"/>
<dbReference type="Antibodypedia" id="46314">
    <property type="antibodies" value="195 antibodies from 28 providers"/>
</dbReference>
<dbReference type="DNASU" id="57674"/>
<dbReference type="Ensembl" id="ENST00000319921.4">
    <molecule id="Q63HN8-5"/>
    <property type="protein sequence ID" value="ENSP00000324392.4"/>
    <property type="gene ID" value="ENSG00000173821.20"/>
</dbReference>
<dbReference type="GeneID" id="57674"/>
<dbReference type="KEGG" id="hsa:57674"/>
<dbReference type="UCSC" id="uc002jyf.5">
    <molecule id="Q63HN8-3"/>
    <property type="organism name" value="human"/>
</dbReference>
<dbReference type="AGR" id="HGNC:14539"/>
<dbReference type="CTD" id="57674"/>
<dbReference type="DisGeNET" id="57674"/>
<dbReference type="GeneCards" id="RNF213"/>
<dbReference type="HGNC" id="HGNC:14539">
    <property type="gene designation" value="RNF213"/>
</dbReference>
<dbReference type="HPA" id="ENSG00000173821">
    <property type="expression patterns" value="Low tissue specificity"/>
</dbReference>
<dbReference type="MalaCards" id="RNF213"/>
<dbReference type="MIM" id="607151">
    <property type="type" value="phenotype"/>
</dbReference>
<dbReference type="MIM" id="613768">
    <property type="type" value="gene"/>
</dbReference>
<dbReference type="neXtProt" id="NX_Q63HN8"/>
<dbReference type="OpenTargets" id="ENSG00000173821"/>
<dbReference type="Orphanet" id="2573">
    <property type="disease" value="Moyamoya disease"/>
</dbReference>
<dbReference type="PharmGKB" id="PA162401681"/>
<dbReference type="VEuPathDB" id="HostDB:ENSG00000173821"/>
<dbReference type="eggNOG" id="ENOG502QQ65">
    <property type="taxonomic scope" value="Eukaryota"/>
</dbReference>
<dbReference type="GeneTree" id="ENSGT00630000089884"/>
<dbReference type="HOGENOM" id="CLU_011233_0_0_1"/>
<dbReference type="InParanoid" id="Q63HN8"/>
<dbReference type="OrthoDB" id="2423195at2759"/>
<dbReference type="PAN-GO" id="Q63HN8">
    <property type="GO annotations" value="6 GO annotations based on evolutionary models"/>
</dbReference>
<dbReference type="TreeFam" id="TF343131"/>
<dbReference type="PathwayCommons" id="Q63HN8"/>
<dbReference type="Reactome" id="R-HSA-9635465">
    <property type="pathway name" value="Suppression of apoptosis"/>
</dbReference>
<dbReference type="Reactome" id="R-HSA-9725370">
    <property type="pathway name" value="Signaling by ALK fusions and activated point mutants"/>
</dbReference>
<dbReference type="Reactome" id="R-HSA-983168">
    <property type="pathway name" value="Antigen processing: Ubiquitination &amp; Proteasome degradation"/>
</dbReference>
<dbReference type="SignaLink" id="Q63HN8"/>
<dbReference type="SIGNOR" id="Q63HN8"/>
<dbReference type="UniPathway" id="UPA00143"/>
<dbReference type="BioGRID-ORCS" id="57674">
    <property type="hits" value="15 hits in 1195 CRISPR screens"/>
</dbReference>
<dbReference type="CD-CODE" id="91857CE7">
    <property type="entry name" value="Nucleolus"/>
</dbReference>
<dbReference type="ChiTaRS" id="RNF213">
    <property type="organism name" value="human"/>
</dbReference>
<dbReference type="GeneWiki" id="RNF213"/>
<dbReference type="GenomeRNAi" id="57674"/>
<dbReference type="Pharos" id="Q63HN8">
    <property type="development level" value="Tbio"/>
</dbReference>
<dbReference type="PRO" id="PR:Q63HN8"/>
<dbReference type="Proteomes" id="UP000005640">
    <property type="component" value="Chromosome 17"/>
</dbReference>
<dbReference type="RNAct" id="Q63HN8">
    <property type="molecule type" value="protein"/>
</dbReference>
<dbReference type="Bgee" id="ENSG00000173821">
    <property type="expression patterns" value="Expressed in granulocyte and 176 other cell types or tissues"/>
</dbReference>
<dbReference type="ExpressionAtlas" id="Q63HN8">
    <property type="expression patterns" value="baseline and differential"/>
</dbReference>
<dbReference type="GO" id="GO:0005737">
    <property type="term" value="C:cytoplasm"/>
    <property type="evidence" value="ECO:0000314"/>
    <property type="project" value="UniProtKB"/>
</dbReference>
<dbReference type="GO" id="GO:0005829">
    <property type="term" value="C:cytosol"/>
    <property type="evidence" value="ECO:0000314"/>
    <property type="project" value="HPA"/>
</dbReference>
<dbReference type="GO" id="GO:0005811">
    <property type="term" value="C:lipid droplet"/>
    <property type="evidence" value="ECO:0000314"/>
    <property type="project" value="UniProtKB"/>
</dbReference>
<dbReference type="GO" id="GO:0016020">
    <property type="term" value="C:membrane"/>
    <property type="evidence" value="ECO:0007005"/>
    <property type="project" value="UniProtKB"/>
</dbReference>
<dbReference type="GO" id="GO:0005730">
    <property type="term" value="C:nucleolus"/>
    <property type="evidence" value="ECO:0000314"/>
    <property type="project" value="HPA"/>
</dbReference>
<dbReference type="GO" id="GO:0005524">
    <property type="term" value="F:ATP binding"/>
    <property type="evidence" value="ECO:0007669"/>
    <property type="project" value="UniProtKB-KW"/>
</dbReference>
<dbReference type="GO" id="GO:0016887">
    <property type="term" value="F:ATP hydrolysis activity"/>
    <property type="evidence" value="ECO:0000314"/>
    <property type="project" value="UniProtKB"/>
</dbReference>
<dbReference type="GO" id="GO:0061630">
    <property type="term" value="F:ubiquitin protein ligase activity"/>
    <property type="evidence" value="ECO:0000314"/>
    <property type="project" value="UniProtKB"/>
</dbReference>
<dbReference type="GO" id="GO:0004842">
    <property type="term" value="F:ubiquitin-protein transferase activity"/>
    <property type="evidence" value="ECO:0000314"/>
    <property type="project" value="UniProtKB"/>
</dbReference>
<dbReference type="GO" id="GO:0008270">
    <property type="term" value="F:zinc ion binding"/>
    <property type="evidence" value="ECO:0007669"/>
    <property type="project" value="UniProtKB-KW"/>
</dbReference>
<dbReference type="GO" id="GO:0001525">
    <property type="term" value="P:angiogenesis"/>
    <property type="evidence" value="ECO:0000315"/>
    <property type="project" value="UniProtKB"/>
</dbReference>
<dbReference type="GO" id="GO:0042742">
    <property type="term" value="P:defense response to bacterium"/>
    <property type="evidence" value="ECO:0000314"/>
    <property type="project" value="UniProtKB"/>
</dbReference>
<dbReference type="GO" id="GO:0002376">
    <property type="term" value="P:immune system process"/>
    <property type="evidence" value="ECO:0007669"/>
    <property type="project" value="UniProtKB-KW"/>
</dbReference>
<dbReference type="GO" id="GO:0140042">
    <property type="term" value="P:lipid droplet formation"/>
    <property type="evidence" value="ECO:0000314"/>
    <property type="project" value="UniProtKB"/>
</dbReference>
<dbReference type="GO" id="GO:0120323">
    <property type="term" value="P:lipid ubiquitination"/>
    <property type="evidence" value="ECO:0000314"/>
    <property type="project" value="UniProtKB"/>
</dbReference>
<dbReference type="GO" id="GO:2000051">
    <property type="term" value="P:negative regulation of non-canonical Wnt signaling pathway"/>
    <property type="evidence" value="ECO:0000315"/>
    <property type="project" value="UniProtKB"/>
</dbReference>
<dbReference type="GO" id="GO:0051865">
    <property type="term" value="P:protein autoubiquitination"/>
    <property type="evidence" value="ECO:0000314"/>
    <property type="project" value="UniProtKB"/>
</dbReference>
<dbReference type="GO" id="GO:0070534">
    <property type="term" value="P:protein K63-linked ubiquitination"/>
    <property type="evidence" value="ECO:0000314"/>
    <property type="project" value="UniProtKB"/>
</dbReference>
<dbReference type="GO" id="GO:0016567">
    <property type="term" value="P:protein ubiquitination"/>
    <property type="evidence" value="ECO:0000314"/>
    <property type="project" value="UniProtKB"/>
</dbReference>
<dbReference type="GO" id="GO:0019216">
    <property type="term" value="P:regulation of lipid metabolic process"/>
    <property type="evidence" value="ECO:0000314"/>
    <property type="project" value="UniProtKB"/>
</dbReference>
<dbReference type="GO" id="GO:0002040">
    <property type="term" value="P:sprouting angiogenesis"/>
    <property type="evidence" value="ECO:0000315"/>
    <property type="project" value="UniProtKB"/>
</dbReference>
<dbReference type="GO" id="GO:0006511">
    <property type="term" value="P:ubiquitin-dependent protein catabolic process"/>
    <property type="evidence" value="ECO:0000315"/>
    <property type="project" value="UniProtKB"/>
</dbReference>
<dbReference type="GO" id="GO:0098792">
    <property type="term" value="P:xenophagy"/>
    <property type="evidence" value="ECO:0000314"/>
    <property type="project" value="UniProtKB"/>
</dbReference>
<dbReference type="CDD" id="cd16561">
    <property type="entry name" value="RING-HC_RNF213"/>
    <property type="match status" value="1"/>
</dbReference>
<dbReference type="FunFam" id="3.30.40.10:FF:000488">
    <property type="entry name" value="E3 ubiquitin-protein ligase RNF213"/>
    <property type="match status" value="1"/>
</dbReference>
<dbReference type="FunFam" id="3.40.50.300:FF:000491">
    <property type="entry name" value="E3 ubiquitin-protein ligase RNF213"/>
    <property type="match status" value="1"/>
</dbReference>
<dbReference type="FunFam" id="3.40.50.300:FF:000804">
    <property type="entry name" value="E3 ubiquitin-protein ligase RNF213"/>
    <property type="match status" value="1"/>
</dbReference>
<dbReference type="Gene3D" id="3.40.50.300">
    <property type="entry name" value="P-loop containing nucleotide triphosphate hydrolases"/>
    <property type="match status" value="2"/>
</dbReference>
<dbReference type="Gene3D" id="3.30.40.10">
    <property type="entry name" value="Zinc/RING finger domain, C3HC4 (zinc finger)"/>
    <property type="match status" value="1"/>
</dbReference>
<dbReference type="InterPro" id="IPR003593">
    <property type="entry name" value="AAA+_ATPase"/>
</dbReference>
<dbReference type="InterPro" id="IPR027417">
    <property type="entry name" value="P-loop_NTPase"/>
</dbReference>
<dbReference type="InterPro" id="IPR031248">
    <property type="entry name" value="RNF213"/>
</dbReference>
<dbReference type="InterPro" id="IPR046439">
    <property type="entry name" value="ZF_RZ_dom"/>
</dbReference>
<dbReference type="InterPro" id="IPR018957">
    <property type="entry name" value="Znf_C3HC4_RING-type"/>
</dbReference>
<dbReference type="InterPro" id="IPR001841">
    <property type="entry name" value="Znf_RING"/>
</dbReference>
<dbReference type="InterPro" id="IPR013083">
    <property type="entry name" value="Znf_RING/FYVE/PHD"/>
</dbReference>
<dbReference type="PANTHER" id="PTHR22605:SF16">
    <property type="entry name" value="E3 UBIQUITIN-PROTEIN LIGASE RNF213"/>
    <property type="match status" value="1"/>
</dbReference>
<dbReference type="PANTHER" id="PTHR22605">
    <property type="entry name" value="RZ-TYPE DOMAIN-CONTAINING PROTEIN"/>
    <property type="match status" value="1"/>
</dbReference>
<dbReference type="Pfam" id="PF00097">
    <property type="entry name" value="zf-C3HC4"/>
    <property type="match status" value="1"/>
</dbReference>
<dbReference type="Pfam" id="PF20173">
    <property type="entry name" value="ZnF_RZ-type"/>
    <property type="match status" value="1"/>
</dbReference>
<dbReference type="SMART" id="SM00382">
    <property type="entry name" value="AAA"/>
    <property type="match status" value="2"/>
</dbReference>
<dbReference type="SMART" id="SM00184">
    <property type="entry name" value="RING"/>
    <property type="match status" value="1"/>
</dbReference>
<dbReference type="SUPFAM" id="SSF52540">
    <property type="entry name" value="P-loop containing nucleoside triphosphate hydrolases"/>
    <property type="match status" value="2"/>
</dbReference>
<dbReference type="SUPFAM" id="SSF57850">
    <property type="entry name" value="RING/U-box"/>
    <property type="match status" value="1"/>
</dbReference>
<dbReference type="PROSITE" id="PS50089">
    <property type="entry name" value="ZF_RING_2"/>
    <property type="match status" value="1"/>
</dbReference>
<dbReference type="PROSITE" id="PS51981">
    <property type="entry name" value="ZF_RZ"/>
    <property type="match status" value="1"/>
</dbReference>
<proteinExistence type="evidence at protein level"/>
<evidence type="ECO:0000250" key="1">
    <source>
        <dbReference type="UniProtKB" id="E9Q555"/>
    </source>
</evidence>
<evidence type="ECO:0000255" key="2"/>
<evidence type="ECO:0000255" key="3">
    <source>
        <dbReference type="PROSITE-ProRule" id="PRU00175"/>
    </source>
</evidence>
<evidence type="ECO:0000255" key="4">
    <source>
        <dbReference type="PROSITE-ProRule" id="PRU01325"/>
    </source>
</evidence>
<evidence type="ECO:0000256" key="5">
    <source>
        <dbReference type="SAM" id="MobiDB-lite"/>
    </source>
</evidence>
<evidence type="ECO:0000269" key="6">
    <source>
    </source>
</evidence>
<evidence type="ECO:0000269" key="7">
    <source>
    </source>
</evidence>
<evidence type="ECO:0000269" key="8">
    <source>
    </source>
</evidence>
<evidence type="ECO:0000269" key="9">
    <source>
    </source>
</evidence>
<evidence type="ECO:0000269" key="10">
    <source>
    </source>
</evidence>
<evidence type="ECO:0000269" key="11">
    <source>
    </source>
</evidence>
<evidence type="ECO:0000269" key="12">
    <source>
    </source>
</evidence>
<evidence type="ECO:0000269" key="13">
    <source>
    </source>
</evidence>
<evidence type="ECO:0000269" key="14">
    <source>
    </source>
</evidence>
<evidence type="ECO:0000269" key="15">
    <source>
    </source>
</evidence>
<evidence type="ECO:0000269" key="16">
    <source>
    </source>
</evidence>
<evidence type="ECO:0000269" key="17">
    <source>
    </source>
</evidence>
<evidence type="ECO:0000269" key="18">
    <source>
    </source>
</evidence>
<evidence type="ECO:0000269" key="19">
    <source>
    </source>
</evidence>
<evidence type="ECO:0000269" key="20">
    <source>
    </source>
</evidence>
<evidence type="ECO:0000269" key="21">
    <source>
    </source>
</evidence>
<evidence type="ECO:0000269" key="22">
    <source>
    </source>
</evidence>
<evidence type="ECO:0000269" key="23">
    <source>
    </source>
</evidence>
<evidence type="ECO:0000269" key="24">
    <source>
    </source>
</evidence>
<evidence type="ECO:0000269" key="25">
    <source>
    </source>
</evidence>
<evidence type="ECO:0000269" key="26">
    <source>
    </source>
</evidence>
<evidence type="ECO:0000269" key="27">
    <source>
    </source>
</evidence>
<evidence type="ECO:0000269" key="28">
    <source>
    </source>
</evidence>
<evidence type="ECO:0000269" key="29">
    <source>
    </source>
</evidence>
<evidence type="ECO:0000269" key="30">
    <source>
    </source>
</evidence>
<evidence type="ECO:0000269" key="31">
    <source>
    </source>
</evidence>
<evidence type="ECO:0000269" key="32">
    <source>
    </source>
</evidence>
<evidence type="ECO:0000269" key="33">
    <source>
    </source>
</evidence>
<evidence type="ECO:0000269" key="34">
    <source>
    </source>
</evidence>
<evidence type="ECO:0000303" key="35">
    <source>
    </source>
</evidence>
<evidence type="ECO:0000303" key="36">
    <source>
    </source>
</evidence>
<evidence type="ECO:0000303" key="37">
    <source>
    </source>
</evidence>
<evidence type="ECO:0000303" key="38">
    <source>
    </source>
</evidence>
<evidence type="ECO:0000303" key="39">
    <source>
    </source>
</evidence>
<evidence type="ECO:0000305" key="40"/>
<evidence type="ECO:0000305" key="41">
    <source>
    </source>
</evidence>
<evidence type="ECO:0000305" key="42">
    <source>
    </source>
</evidence>
<evidence type="ECO:0000305" key="43">
    <source>
    </source>
</evidence>
<evidence type="ECO:0000312" key="44">
    <source>
        <dbReference type="HGNC" id="HGNC:14539"/>
    </source>
</evidence>
<evidence type="ECO:0007744" key="45">
    <source>
    </source>
</evidence>
<evidence type="ECO:0007744" key="46">
    <source>
    </source>
</evidence>
<evidence type="ECO:0007744" key="47">
    <source>
    </source>
</evidence>
<evidence type="ECO:0007744" key="48">
    <source>
    </source>
</evidence>
<evidence type="ECO:0007744" key="49">
    <source>
    </source>
</evidence>
<evidence type="ECO:0007744" key="50">
    <source>
    </source>
</evidence>
<evidence type="ECO:0007744" key="51">
    <source>
    </source>
</evidence>
<evidence type="ECO:0007744" key="52">
    <source>
    </source>
</evidence>
<evidence type="ECO:0007744" key="53">
    <source>
    </source>
</evidence>
<evidence type="ECO:0007744" key="54">
    <source>
    </source>
</evidence>
<evidence type="ECO:0007829" key="55">
    <source>
        <dbReference type="PDB" id="8S24"/>
    </source>
</evidence>